<accession>P29033</accession>
<accession>Q508A5</accession>
<accession>Q508A6</accession>
<accession>Q5YLL0</accession>
<accession>Q5YLL1</accession>
<accession>Q5YLL4</accession>
<accession>Q6IPV5</accession>
<accession>Q86U88</accession>
<accession>Q96AK0</accession>
<accession>Q9H536</accession>
<accession>Q9NNY4</accession>
<comment type="function">
    <text evidence="31 32 39 40 43 45">Structural component of gap junctions (PubMed:16849369, PubMed:17551008, PubMed:19340074, PubMed:19384972, PubMed:21094651, PubMed:26753910). Gap junctions are dodecameric channels that connect the cytoplasm of adjoining cells. They are formed by the docking of two hexameric hemichannels, one from each cell membrane (PubMed:17551008, PubMed:19340074, PubMed:21094651, PubMed:26753910). Small molecules and ions diffuse from one cell to a neighboring cell via the central pore (PubMed:16849369, PubMed:19384972, PubMed:21094651).</text>
</comment>
<comment type="subunit">
    <text evidence="1 32 39 42 43 45">A hemichannel or connexon is composed of a hexamer of connexins. A functional gap junction is formed by the apposition of two hemichannels (PubMed:17551008, PubMed:19340074, PubMed:21094651, PubMed:26753910). Interacts with CNST (PubMed:19864490). Forms heteromeric channels with GJB4 (By similarity).</text>
</comment>
<comment type="interaction">
    <interactant intactId="EBI-3905204">
        <id>P29033</id>
    </interactant>
    <interactant intactId="EBI-19125216">
        <id>Q86WK6</id>
        <label>AMIGO1</label>
    </interactant>
    <organismsDiffer>false</organismsDiffer>
    <experiments>3</experiments>
</comment>
<comment type="interaction">
    <interactant intactId="EBI-3905204">
        <id>P29033</id>
    </interactant>
    <interactant intactId="EBI-2875891">
        <id>P35414</id>
        <label>APLNR</label>
    </interactant>
    <organismsDiffer>false</organismsDiffer>
    <experiments>3</experiments>
</comment>
<comment type="interaction">
    <interactant intactId="EBI-3905204">
        <id>P29033</id>
    </interactant>
    <interactant intactId="EBI-13059134">
        <id>Q13520</id>
        <label>AQP6</label>
    </interactant>
    <organismsDiffer>false</organismsDiffer>
    <experiments>3</experiments>
</comment>
<comment type="interaction">
    <interactant intactId="EBI-3905204">
        <id>P29033</id>
    </interactant>
    <interactant intactId="EBI-11343438">
        <id>Q3SXY8</id>
        <label>ARL13B</label>
    </interactant>
    <organismsDiffer>false</organismsDiffer>
    <experiments>3</experiments>
</comment>
<comment type="interaction">
    <interactant intactId="EBI-3905204">
        <id>P29033</id>
    </interactant>
    <interactant intactId="EBI-3915253">
        <id>Q15125</id>
        <label>EBP</label>
    </interactant>
    <organismsDiffer>false</organismsDiffer>
    <experiments>3</experiments>
</comment>
<comment type="interaction">
    <interactant intactId="EBI-3905204">
        <id>P29033</id>
    </interactant>
    <interactant intactId="EBI-781551">
        <id>Q9Y282</id>
        <label>ERGIC3</label>
    </interactant>
    <organismsDiffer>false</organismsDiffer>
    <experiments>3</experiments>
</comment>
<comment type="interaction">
    <interactant intactId="EBI-3905204">
        <id>P29033</id>
    </interactant>
    <interactant intactId="EBI-18304435">
        <id>Q5JX71</id>
        <label>FAM209A</label>
    </interactant>
    <organismsDiffer>false</organismsDiffer>
    <experiments>3</experiments>
</comment>
<comment type="interaction">
    <interactant intactId="EBI-3905204">
        <id>P29033</id>
    </interactant>
    <interactant intactId="EBI-2833872">
        <id>O15552</id>
        <label>FFAR2</label>
    </interactant>
    <organismsDiffer>false</organismsDiffer>
    <experiments>3</experiments>
</comment>
<comment type="interaction">
    <interactant intactId="EBI-3905204">
        <id>P29033</id>
    </interactant>
    <interactant intactId="EBI-750433">
        <id>P36382</id>
        <label>GJA5</label>
    </interactant>
    <organismsDiffer>false</organismsDiffer>
    <experiments>3</experiments>
</comment>
<comment type="interaction">
    <interactant intactId="EBI-3905204">
        <id>P29033</id>
    </interactant>
    <interactant intactId="EBI-17458373">
        <id>P48165</id>
        <label>GJA8</label>
    </interactant>
    <organismsDiffer>false</organismsDiffer>
    <experiments>3</experiments>
</comment>
<comment type="interaction">
    <interactant intactId="EBI-3905204">
        <id>P29033</id>
    </interactant>
    <interactant intactId="EBI-17565645">
        <id>P08034</id>
        <label>GJB1</label>
    </interactant>
    <organismsDiffer>false</organismsDiffer>
    <experiments>3</experiments>
</comment>
<comment type="interaction">
    <interactant intactId="EBI-3905204">
        <id>P29033</id>
    </interactant>
    <interactant intactId="EBI-3905204">
        <id>P29033</id>
        <label>GJB2</label>
    </interactant>
    <organismsDiffer>false</organismsDiffer>
    <experiments>4</experiments>
</comment>
<comment type="interaction">
    <interactant intactId="EBI-3905204">
        <id>P29033</id>
    </interactant>
    <interactant intactId="EBI-13345167">
        <id>Q8TDT2</id>
        <label>GPR152</label>
    </interactant>
    <organismsDiffer>false</organismsDiffer>
    <experiments>3</experiments>
</comment>
<comment type="interaction">
    <interactant intactId="EBI-3905204">
        <id>P29033</id>
    </interactant>
    <interactant intactId="EBI-18076404">
        <id>O15529</id>
        <label>GPR42</label>
    </interactant>
    <organismsDiffer>false</organismsDiffer>
    <experiments>3</experiments>
</comment>
<comment type="interaction">
    <interactant intactId="EBI-3905204">
        <id>P29033</id>
    </interactant>
    <interactant intactId="EBI-18053395">
        <id>Q7Z5P4</id>
        <label>HSD17B13</label>
    </interactant>
    <organismsDiffer>false</organismsDiffer>
    <experiments>3</experiments>
</comment>
<comment type="interaction">
    <interactant intactId="EBI-3905204">
        <id>P29033</id>
    </interactant>
    <interactant intactId="EBI-3934936">
        <id>O95279</id>
        <label>KCNK5</label>
    </interactant>
    <organismsDiffer>false</organismsDiffer>
    <experiments>3</experiments>
</comment>
<comment type="interaction">
    <interactant intactId="EBI-3905204">
        <id>P29033</id>
    </interactant>
    <interactant intactId="EBI-9018187">
        <id>P26715</id>
        <label>KLRC1</label>
    </interactant>
    <organismsDiffer>false</organismsDiffer>
    <experiments>3</experiments>
</comment>
<comment type="interaction">
    <interactant intactId="EBI-3905204">
        <id>P29033</id>
    </interactant>
    <interactant intactId="EBI-2820517">
        <id>Q8TAF8</id>
        <label>LHFPL5</label>
    </interactant>
    <organismsDiffer>false</organismsDiffer>
    <experiments>3</experiments>
</comment>
<comment type="interaction">
    <interactant intactId="EBI-3905204">
        <id>P29033</id>
    </interactant>
    <interactant intactId="EBI-3925442">
        <id>Q9HCJ2</id>
        <label>LRRC4C</label>
    </interactant>
    <organismsDiffer>false</organismsDiffer>
    <experiments>3</experiments>
</comment>
<comment type="interaction">
    <interactant intactId="EBI-3905204">
        <id>P29033</id>
    </interactant>
    <interactant intactId="EBI-2858252">
        <id>Q6ZSS7</id>
        <label>MFSD6</label>
    </interactant>
    <organismsDiffer>false</organismsDiffer>
    <experiments>3</experiments>
</comment>
<comment type="interaction">
    <interactant intactId="EBI-3905204">
        <id>P29033</id>
    </interactant>
    <interactant intactId="EBI-17931225">
        <id>Q96DS6</id>
        <label>MS4A6E</label>
    </interactant>
    <organismsDiffer>false</organismsDiffer>
    <experiments>3</experiments>
</comment>
<comment type="interaction">
    <interactant intactId="EBI-3905204">
        <id>P29033</id>
    </interactant>
    <interactant intactId="EBI-594836">
        <id>O00623</id>
        <label>PEX12</label>
    </interactant>
    <organismsDiffer>false</organismsDiffer>
    <experiments>3</experiments>
</comment>
<comment type="interaction">
    <interactant intactId="EBI-3905204">
        <id>P29033</id>
    </interactant>
    <interactant intactId="EBI-373552">
        <id>Q96CS7</id>
        <label>PLEKHB2</label>
    </interactant>
    <organismsDiffer>false</organismsDiffer>
    <experiments>3</experiments>
</comment>
<comment type="interaction">
    <interactant intactId="EBI-3905204">
        <id>P29033</id>
    </interactant>
    <interactant intactId="EBI-3920694">
        <id>Q9NR31</id>
        <label>SAR1A</label>
    </interactant>
    <organismsDiffer>false</organismsDiffer>
    <experiments>3</experiments>
</comment>
<comment type="interaction">
    <interactant intactId="EBI-3905204">
        <id>P29033</id>
    </interactant>
    <interactant intactId="EBI-18037857">
        <id>Q3SXP7</id>
        <label>SHISAL1</label>
    </interactant>
    <organismsDiffer>false</organismsDiffer>
    <experiments>3</experiments>
</comment>
<comment type="interaction">
    <interactant intactId="EBI-3905204">
        <id>P29033</id>
    </interactant>
    <interactant intactId="EBI-17595455">
        <id>P54219-3</id>
        <label>SLC18A1</label>
    </interactant>
    <organismsDiffer>false</organismsDiffer>
    <experiments>3</experiments>
</comment>
<comment type="interaction">
    <interactant intactId="EBI-3905204">
        <id>P29033</id>
    </interactant>
    <interactant intactId="EBI-8644112">
        <id>Q9BRI3</id>
        <label>SLC30A2</label>
    </interactant>
    <organismsDiffer>false</organismsDiffer>
    <experiments>3</experiments>
</comment>
<comment type="interaction">
    <interactant intactId="EBI-3905204">
        <id>P29033</id>
    </interactant>
    <interactant intactId="EBI-17280858">
        <id>Q8WWF3</id>
        <label>SSMEM1</label>
    </interactant>
    <organismsDiffer>false</organismsDiffer>
    <experiments>3</experiments>
</comment>
<comment type="interaction">
    <interactant intactId="EBI-3905204">
        <id>P29033</id>
    </interactant>
    <interactant intactId="EBI-18271435">
        <id>Q0VAB0</id>
        <label>TBXA2R</label>
    </interactant>
    <organismsDiffer>false</organismsDiffer>
    <experiments>3</experiments>
</comment>
<comment type="interaction">
    <interactant intactId="EBI-3905204">
        <id>P29033</id>
    </interactant>
    <interactant intactId="EBI-19027521">
        <id>Q8N6K0</id>
        <label>TEX29</label>
    </interactant>
    <organismsDiffer>false</organismsDiffer>
    <experiments>3</experiments>
</comment>
<comment type="interaction">
    <interactant intactId="EBI-3905204">
        <id>P29033</id>
    </interactant>
    <interactant intactId="EBI-6268651">
        <id>Q9NPL8</id>
        <label>TIMMDC1</label>
    </interactant>
    <organismsDiffer>false</organismsDiffer>
    <experiments>3</experiments>
</comment>
<comment type="interaction">
    <interactant intactId="EBI-3905204">
        <id>P29033</id>
    </interactant>
    <interactant intactId="EBI-12947623">
        <id>Q96MV1</id>
        <label>TLCD4</label>
    </interactant>
    <organismsDiffer>false</organismsDiffer>
    <experiments>3</experiments>
</comment>
<comment type="interaction">
    <interactant intactId="EBI-3905204">
        <id>P29033</id>
    </interactant>
    <interactant intactId="EBI-7054664">
        <id>Q9BX73</id>
        <label>TM2D2</label>
    </interactant>
    <organismsDiffer>false</organismsDiffer>
    <experiments>3</experiments>
</comment>
<comment type="interaction">
    <interactant intactId="EBI-3905204">
        <id>P29033</id>
    </interactant>
    <interactant intactId="EBI-3915978">
        <id>Q96A25</id>
        <label>TMEM106A</label>
    </interactant>
    <organismsDiffer>false</organismsDiffer>
    <experiments>3</experiments>
</comment>
<comment type="interaction">
    <interactant intactId="EBI-3905204">
        <id>P29033</id>
    </interactant>
    <interactant intactId="EBI-10982110">
        <id>Q96Q45-2</id>
        <label>TMEM237</label>
    </interactant>
    <organismsDiffer>false</organismsDiffer>
    <experiments>3</experiments>
</comment>
<comment type="interaction">
    <interactant intactId="EBI-3905204">
        <id>P29033</id>
    </interactant>
    <interactant intactId="EBI-6447886">
        <id>Q9Y320</id>
        <label>TMX2</label>
    </interactant>
    <organismsDiffer>false</organismsDiffer>
    <experiments>3</experiments>
</comment>
<comment type="interaction">
    <interactant intactId="EBI-3905204">
        <id>P29033</id>
    </interactant>
    <interactant intactId="EBI-18055230">
        <id>P34981</id>
        <label>TRHR</label>
    </interactant>
    <organismsDiffer>false</organismsDiffer>
    <experiments>3</experiments>
</comment>
<comment type="subcellular location">
    <subcellularLocation>
        <location evidence="31 32 39 40 43 45">Cell membrane</location>
        <topology evidence="32 39 43 45">Multi-pass membrane protein</topology>
    </subcellularLocation>
    <subcellularLocation>
        <location evidence="31 32 39 40 43 45">Cell junction</location>
        <location evidence="31 32 39 40 43 45">Gap junction</location>
    </subcellularLocation>
    <text evidence="1">Colocalizes with GJB4 at gap junction plaques in the cochlea.</text>
</comment>
<comment type="disease" evidence="6 8 9 17 20 40 54">
    <disease id="DI-00852">
        <name>Deafness, autosomal recessive, 1A</name>
        <acronym>DFNB1A</acronym>
        <description>A form of non-syndromic sensorineural hearing loss. Sensorineural deafness results from damage to the neural receptors of the inner ear, the nerve pathways to the brain, or the area of the brain that receives sound information.</description>
        <dbReference type="MIM" id="220290"/>
    </disease>
    <text>The disease is caused by variants affecting the gene represented in this entry.</text>
</comment>
<comment type="disease" evidence="6 8 9 17 20 40 54">
    <disease id="DI-00834">
        <name>Deafness, autosomal dominant, 3A</name>
        <acronym>DFNA3A</acronym>
        <description>A form of non-syndromic sensorineural hearing loss. Sensorineural deafness results from damage to the neural receptors of the inner ear, the nerve pathways to the brain, or the area of the brain that receives sound information.</description>
        <dbReference type="MIM" id="601544"/>
    </disease>
    <text>The disease is caused by variants affecting the gene represented in this entry.</text>
</comment>
<comment type="disease" evidence="2 17 29 37">
    <disease id="DI-01129">
        <name>Vohwinkel syndrome</name>
        <acronym>VOWNKL</acronym>
        <description>An autosomal dominant disease characterized by hyperkeratosis, constriction on fingers and toes and congenital deafness.</description>
        <dbReference type="MIM" id="124500"/>
    </disease>
    <text>The disease is caused by variants affecting the gene represented in this entry.</text>
</comment>
<comment type="disease" evidence="4 5 14 17 30 36 55">
    <disease id="DI-00898">
        <name>Keratoderma, palmoplantar, with deafness</name>
        <acronym>PPKDFN</acronym>
        <description>An autosomal dominant disorder characterized by the association of palmoplantar hyperkeratosis with progressive, bilateral, high-frequency, sensorineural deafness.</description>
        <dbReference type="MIM" id="148350"/>
    </disease>
    <text>The disease is caused by variants affecting the gene represented in this entry.</text>
</comment>
<comment type="disease" evidence="10 15 19">
    <disease id="DI-00624">
        <name>Keratitis-ichthyosis-deafness syndrome, autosomal dominant</name>
        <acronym>KIDAD</acronym>
        <description>An autosomal dominant form of keratitis-ichthyosis-deafness syndrome, a disease characterized by the association of hyperkeratotic skin lesions with vascularizing keratitis and profound sensorineural hearing loss. Clinical features include deafness, ichthyosis, photophobia, absent or decreased eyebrows, sparse or absent scalp hair, decreased sweating and dysplastic finger and toenails.</description>
        <dbReference type="MIM" id="148210"/>
    </disease>
    <text>The disease is caused by variants affecting the gene represented in this entry.</text>
</comment>
<comment type="disease" evidence="23 28">
    <disease id="DI-00172">
        <name>Bart-Pumphrey syndrome</name>
        <acronym>BAPS</acronym>
        <description>An autosomal dominant disorder characterized by sensorineural hearing loss, palmoplantar keratoderma, knuckle pads, and leukonychia, It shows considerable phenotypic variability.</description>
        <dbReference type="MIM" id="149200"/>
    </disease>
    <text>The disease is caused by variants affecting the gene represented in this entry.</text>
</comment>
<comment type="disease" evidence="11">
    <disease id="DI-00586">
        <name>Ichthyosis hystrix-like with deafness syndrome</name>
        <acronym>HID syndrome</acronym>
        <description>An autosomal dominant keratinizing disorder characterized by sensorineural deafness and spiky hyperkeratosis affecting the entire skin. HID syndrome is considered to differ from the similar KID syndrome in the extent and time of occurrence of skin symptoms and the severity of the associated keratitis.</description>
        <dbReference type="MIM" id="602540"/>
    </disease>
    <text>The disease is caused by variants affecting the gene represented in this entry.</text>
</comment>
<comment type="similarity">
    <text evidence="59">Belongs to the connexin family. Beta-type (group I) subfamily.</text>
</comment>
<comment type="caution">
    <text>The role of Thr-34 and Ile-37 variants in deafness was unclear (PubMed:14694360, PubMed:16849369, PubMed:17935238, PubMed:9139825, PubMed:9422505). However, their pathogenicity has been definitely confirmed (PubMed:31160754).</text>
</comment>
<comment type="online information" name="Connexin-deafness homepage">
    <link uri="http://perelman.crg.es/deafness/"/>
</comment>
<comment type="online information" name="Hereditary hearing loss homepage">
    <link uri="https://hereditaryhearingloss.org/dominant"/>
    <text>Gene page</text>
</comment>
<comment type="online information" name="Protein Spotlight">
    <link uri="https://www.proteinspotlight.org/back_issues/264/"/>
    <text>Sound and silence - Issue 264 of December 2023</text>
</comment>
<proteinExistence type="evidence at protein level"/>
<reference key="1">
    <citation type="journal article" date="1992" name="J. Cell Biol.">
        <title>Transcriptional downregulation of gap-junction proteins blocks junctional communication in human mammary tumor cell lines.</title>
        <authorList>
            <person name="Lee S.W."/>
            <person name="Tomasetto C."/>
            <person name="Paul D."/>
            <person name="Keyomarsi K."/>
            <person name="Sager R."/>
        </authorList>
    </citation>
    <scope>NUCLEOTIDE SEQUENCE [MRNA]</scope>
</reference>
<reference key="2">
    <citation type="journal article" date="2001" name="Hum. Mutat.">
        <title>Pattern of connexin 26 (GJB2) mutations causing sensorineural hearing impairment in Ghana.</title>
        <authorList>
            <person name="Hamelmann C."/>
            <person name="Amedofu G.K."/>
            <person name="Albrecht K."/>
            <person name="Muntau B."/>
            <person name="Gelhaus A."/>
            <person name="Brobby G.W."/>
            <person name="Horstmann R.D."/>
        </authorList>
    </citation>
    <scope>NUCLEOTIDE SEQUENCE [GENOMIC DNA]</scope>
    <scope>VARIANTS DFNB1A PRO-79; TRP-143; ALA-178; LYS-203 AND PRO-214</scope>
    <scope>VARIANTS DFNA3A GLN-184 AND SER-197</scope>
    <source>
        <tissue>Blood</tissue>
    </source>
</reference>
<reference key="3">
    <citation type="journal article" date="2004" name="Hum. Mutat.">
        <title>Low frequency of deafness-associated GJB2 variants in Kenya and Sudan and novel GJB2 variants.</title>
        <authorList>
            <person name="Gasmelseed N.M.A."/>
            <person name="Schmidt M."/>
            <person name="Magzoub M.M.A."/>
            <person name="Macharia M."/>
            <person name="Elmustafa O.M."/>
            <person name="Ototo B."/>
            <person name="Winkler E."/>
            <person name="Ruge G."/>
            <person name="Horstmann R.D."/>
            <person name="Meyer C.G."/>
        </authorList>
    </citation>
    <scope>NUCLEOTIDE SEQUENCE [GENOMIC DNA]</scope>
    <scope>VARIANT DFNB1A ILE-37</scope>
    <scope>VARIANTS 46-ASP--GLN-48 DELINS GLU; HIS-127; ILE-153; SER-160 AND MET-167</scope>
</reference>
<reference key="4">
    <citation type="journal article" date="2005" name="Am. J. Med. Genet. A">
        <title>GJB2 mutations: passage through Iran.</title>
        <authorList>
            <person name="Najmabadi H."/>
            <person name="Nishimura C."/>
            <person name="Kahrizi K."/>
            <person name="Riazalhosseini Y."/>
            <person name="Malekpour M."/>
            <person name="Daneshi A."/>
            <person name="Farhadi M."/>
            <person name="Mohseni M."/>
            <person name="Mahdieh N."/>
            <person name="Ebrahimi A."/>
            <person name="Bazazzadegan N."/>
            <person name="Naghavi A."/>
            <person name="Avenarius M."/>
            <person name="Arzhangi S."/>
            <person name="Smith R.J.H."/>
        </authorList>
    </citation>
    <scope>NUCLEOTIDE SEQUENCE [GENOMIC DNA]</scope>
    <scope>VARIANTS DFNB1A HIS-32; LYS-80; ILE-93; GLU-120 DEL; LYS-129; TRP-143 AND PRO-184</scope>
    <scope>VARIANTS ILE-27; GLY-114; HIS-127 AND ILE-153</scope>
</reference>
<reference key="5">
    <citation type="submission" date="2002-02" db="EMBL/GenBank/DDBJ databases">
        <title>A polymorphism in the genomic sequence of the coding region of connexin 26 in the South Indian population.</title>
        <authorList>
            <person name="Joseph A.Y."/>
            <person name="Rasool T.J."/>
        </authorList>
    </citation>
    <scope>NUCLEOTIDE SEQUENCE [GENOMIC DNA]</scope>
</reference>
<reference key="6">
    <citation type="submission" date="2003-03" db="EMBL/GenBank/DDBJ databases">
        <title>A novel mutation in the connexin 26 gene in the South Indian population.</title>
        <authorList>
            <person name="Joseph A.Y."/>
            <person name="Rasool T.J."/>
        </authorList>
    </citation>
    <scope>NUCLEOTIDE SEQUENCE [GENOMIC DNA]</scope>
    <scope>VARIANT LEU-32</scope>
</reference>
<reference key="7">
    <citation type="submission" date="2003-05" db="EMBL/GenBank/DDBJ databases">
        <title>Cloning of human full-length CDSs in BD Creator(TM) system donor vector.</title>
        <authorList>
            <person name="Kalnine N."/>
            <person name="Chen X."/>
            <person name="Rolfs A."/>
            <person name="Halleck A."/>
            <person name="Hines L."/>
            <person name="Eisenstein S."/>
            <person name="Koundinya M."/>
            <person name="Raphael J."/>
            <person name="Moreira D."/>
            <person name="Kelley T."/>
            <person name="LaBaer J."/>
            <person name="Lin Y."/>
            <person name="Phelan M."/>
            <person name="Farmer A."/>
        </authorList>
    </citation>
    <scope>NUCLEOTIDE SEQUENCE [LARGE SCALE MRNA]</scope>
</reference>
<reference key="8">
    <citation type="journal article" date="2004" name="Nature">
        <title>The DNA sequence and analysis of human chromosome 13.</title>
        <authorList>
            <person name="Dunham A."/>
            <person name="Matthews L.H."/>
            <person name="Burton J."/>
            <person name="Ashurst J.L."/>
            <person name="Howe K.L."/>
            <person name="Ashcroft K.J."/>
            <person name="Beare D.M."/>
            <person name="Burford D.C."/>
            <person name="Hunt S.E."/>
            <person name="Griffiths-Jones S."/>
            <person name="Jones M.C."/>
            <person name="Keenan S.J."/>
            <person name="Oliver K."/>
            <person name="Scott C.E."/>
            <person name="Ainscough R."/>
            <person name="Almeida J.P."/>
            <person name="Ambrose K.D."/>
            <person name="Andrews D.T."/>
            <person name="Ashwell R.I.S."/>
            <person name="Babbage A.K."/>
            <person name="Bagguley C.L."/>
            <person name="Bailey J."/>
            <person name="Bannerjee R."/>
            <person name="Barlow K.F."/>
            <person name="Bates K."/>
            <person name="Beasley H."/>
            <person name="Bird C.P."/>
            <person name="Bray-Allen S."/>
            <person name="Brown A.J."/>
            <person name="Brown J.Y."/>
            <person name="Burrill W."/>
            <person name="Carder C."/>
            <person name="Carter N.P."/>
            <person name="Chapman J.C."/>
            <person name="Clamp M.E."/>
            <person name="Clark S.Y."/>
            <person name="Clarke G."/>
            <person name="Clee C.M."/>
            <person name="Clegg S.C."/>
            <person name="Cobley V."/>
            <person name="Collins J.E."/>
            <person name="Corby N."/>
            <person name="Coville G.J."/>
            <person name="Deloukas P."/>
            <person name="Dhami P."/>
            <person name="Dunham I."/>
            <person name="Dunn M."/>
            <person name="Earthrowl M.E."/>
            <person name="Ellington A.G."/>
            <person name="Faulkner L."/>
            <person name="Frankish A.G."/>
            <person name="Frankland J."/>
            <person name="French L."/>
            <person name="Garner P."/>
            <person name="Garnett J."/>
            <person name="Gilbert J.G.R."/>
            <person name="Gilson C.J."/>
            <person name="Ghori J."/>
            <person name="Grafham D.V."/>
            <person name="Gribble S.M."/>
            <person name="Griffiths C."/>
            <person name="Hall R.E."/>
            <person name="Hammond S."/>
            <person name="Harley J.L."/>
            <person name="Hart E.A."/>
            <person name="Heath P.D."/>
            <person name="Howden P.J."/>
            <person name="Huckle E.J."/>
            <person name="Hunt P.J."/>
            <person name="Hunt A.R."/>
            <person name="Johnson C."/>
            <person name="Johnson D."/>
            <person name="Kay M."/>
            <person name="Kimberley A.M."/>
            <person name="King A."/>
            <person name="Laird G.K."/>
            <person name="Langford C.J."/>
            <person name="Lawlor S."/>
            <person name="Leongamornlert D.A."/>
            <person name="Lloyd D.M."/>
            <person name="Lloyd C."/>
            <person name="Loveland J.E."/>
            <person name="Lovell J."/>
            <person name="Martin S."/>
            <person name="Mashreghi-Mohammadi M."/>
            <person name="McLaren S.J."/>
            <person name="McMurray A."/>
            <person name="Milne S."/>
            <person name="Moore M.J.F."/>
            <person name="Nickerson T."/>
            <person name="Palmer S.A."/>
            <person name="Pearce A.V."/>
            <person name="Peck A.I."/>
            <person name="Pelan S."/>
            <person name="Phillimore B."/>
            <person name="Porter K.M."/>
            <person name="Rice C.M."/>
            <person name="Searle S."/>
            <person name="Sehra H.K."/>
            <person name="Shownkeen R."/>
            <person name="Skuce C.D."/>
            <person name="Smith M."/>
            <person name="Steward C.A."/>
            <person name="Sycamore N."/>
            <person name="Tester J."/>
            <person name="Thomas D.W."/>
            <person name="Tracey A."/>
            <person name="Tromans A."/>
            <person name="Tubby B."/>
            <person name="Wall M."/>
            <person name="Wallis J.M."/>
            <person name="West A.P."/>
            <person name="Whitehead S.L."/>
            <person name="Willey D.L."/>
            <person name="Wilming L."/>
            <person name="Wray P.W."/>
            <person name="Wright M.W."/>
            <person name="Young L."/>
            <person name="Coulson A."/>
            <person name="Durbin R.M."/>
            <person name="Hubbard T."/>
            <person name="Sulston J.E."/>
            <person name="Beck S."/>
            <person name="Bentley D.R."/>
            <person name="Rogers J."/>
            <person name="Ross M.T."/>
        </authorList>
    </citation>
    <scope>NUCLEOTIDE SEQUENCE [LARGE SCALE GENOMIC DNA]</scope>
</reference>
<reference key="9">
    <citation type="journal article" date="2004" name="Genome Res.">
        <title>The status, quality, and expansion of the NIH full-length cDNA project: the Mammalian Gene Collection (MGC).</title>
        <authorList>
            <consortium name="The MGC Project Team"/>
        </authorList>
    </citation>
    <scope>NUCLEOTIDE SEQUENCE [LARGE SCALE MRNA]</scope>
    <scope>VARIANTS ILE-27 AND GLY-114</scope>
    <source>
        <tissue>Colon</tissue>
    </source>
</reference>
<reference key="10">
    <citation type="journal article" date="2005" name="J. Med. Genet.">
        <title>A novel deletion involving the connexin-30 gene, del(GJB6-d13s1854), found in trans with mutations in the GJB2 gene (connexin-26) in subjects with DFNB1 non-syndromic hearing impairment.</title>
        <authorList>
            <person name="del Castillo F.J."/>
            <person name="Rodriguez-Ballesteros M."/>
            <person name="Alvarez A."/>
            <person name="Hutchin T."/>
            <person name="Leonardi E."/>
            <person name="de Oliveira C.A."/>
            <person name="Azaiez H."/>
            <person name="Brownstein Z."/>
            <person name="Avenarius M.R."/>
            <person name="Marlin S."/>
            <person name="Pandya A."/>
            <person name="Shahin H."/>
            <person name="Siemering K.R."/>
            <person name="Weil D."/>
            <person name="Wuyts W."/>
            <person name="Aguirre L.A."/>
            <person name="Martin Y."/>
            <person name="Moreno-Pelayo M.A."/>
            <person name="Villamar M."/>
            <person name="Avraham K.B."/>
            <person name="Dahl H.H."/>
            <person name="Kanaan M."/>
            <person name="Nance W.E."/>
            <person name="Petit C."/>
            <person name="Smith R.J."/>
            <person name="Van Camp G."/>
            <person name="Sartorato E.L."/>
            <person name="Murgia A."/>
            <person name="Moreno F."/>
            <person name="del Castillo I."/>
        </authorList>
    </citation>
    <scope>INVOLVEMENT IN DFNB1A</scope>
</reference>
<reference key="11">
    <citation type="journal article" date="2010" name="Hum. Mol. Genet.">
        <title>Consortin, a trans-Golgi network cargo receptor for the plasma membrane targeting and recycling of connexins.</title>
        <authorList>
            <person name="del Castillo F.J."/>
            <person name="Cohen-Salmon M."/>
            <person name="Charollais A."/>
            <person name="Caille D."/>
            <person name="Lampe P.D."/>
            <person name="Chavrier P."/>
            <person name="Meda P."/>
            <person name="Petit C."/>
        </authorList>
    </citation>
    <scope>INTERACTION WITH CNST</scope>
</reference>
<reference key="12">
    <citation type="journal article" date="2007" name="Proc. Natl. Acad. Sci. U.S.A.">
        <title>Three-dimensional structure of a human connexin26 gap junction channel reveals a plug in the vestibule.</title>
        <authorList>
            <person name="Oshima A."/>
            <person name="Tani K."/>
            <person name="Hiroaki Y."/>
            <person name="Fujiyoshi Y."/>
            <person name="Sosinsky G.E."/>
        </authorList>
    </citation>
    <scope>STRUCTURE BY ELECTRON MICROSCOPY OF MUTANT ALA-34</scope>
    <scope>FUNCTION</scope>
    <scope>SUBCELLULAR LOCATION</scope>
    <scope>SUBUNIT</scope>
    <scope>TOPOLOGY</scope>
</reference>
<reference key="13">
    <citation type="journal article" date="2009" name="Nature">
        <title>Structure of the connexin 26 gap junction channel at 3.5 A resolution.</title>
        <authorList>
            <person name="Maeda S."/>
            <person name="Nakagawa S."/>
            <person name="Suga M."/>
            <person name="Yamashita E."/>
            <person name="Oshima A."/>
            <person name="Fujiyoshi Y."/>
            <person name="Tsukihara T."/>
        </authorList>
    </citation>
    <scope>X-RAY CRYSTALLOGRAPHY (3.5 ANGSTROMS)</scope>
    <scope>FUNCTION</scope>
    <scope>SUBCELLULAR LOCATION</scope>
    <scope>SUBUNIT</scope>
    <scope>TOPOLOGY</scope>
    <scope>DISULFIDE BONDS</scope>
</reference>
<reference evidence="62 63" key="14">
    <citation type="journal article" date="2011" name="J. Mol. Biol.">
        <title>Asymmetric configurations and N-terminal rearrangements in connexin26 gap junction channels.</title>
        <authorList>
            <person name="Oshima A."/>
            <person name="Tani K."/>
            <person name="Toloue M.M."/>
            <person name="Hiroaki Y."/>
            <person name="Smock A."/>
            <person name="Inukai S."/>
            <person name="Cone A."/>
            <person name="Nicholson B.J."/>
            <person name="Sosinsky G.E."/>
            <person name="Fujiyoshi Y."/>
        </authorList>
    </citation>
    <scope>STRUCTURE BY ELECTRON MICROSCOPY (6.00 ANGSTROMS) OF MUTANT ALA-34</scope>
    <scope>FUNCTION</scope>
    <scope>SUBCELLULAR LOCATION</scope>
    <scope>SUBUNIT</scope>
    <scope>MUTAGENESIS OF 2-ASP--GLN-7; 2-ASP--LEU-10 AND MET-34</scope>
</reference>
<reference evidence="64 65" key="15">
    <citation type="journal article" date="2016" name="Nat. Commun.">
        <title>An electrostatic mechanism for Ca(2+)-mediated regulation of gap junction channels.</title>
        <authorList>
            <person name="Bennett B.C."/>
            <person name="Purdy M.D."/>
            <person name="Baker K.A."/>
            <person name="Acharya C."/>
            <person name="McIntire W.E."/>
            <person name="Stevens R.C."/>
            <person name="Zhang Q."/>
            <person name="Harris A.L."/>
            <person name="Abagyan R."/>
            <person name="Yeager M."/>
        </authorList>
    </citation>
    <scope>X-RAY CRYSTALLOGRAPHY (3.29 ANGSTROMS) IN COMPLEX WITH CALCIUM</scope>
    <scope>FUNCTION</scope>
    <scope>SUBCELLULAR LOCATION</scope>
    <scope>SUBUNIT</scope>
    <scope>TOPOLOGY</scope>
    <scope>DISULFIDE BONDS</scope>
</reference>
<reference key="16">
    <citation type="journal article" date="1997" name="Nature">
        <title>Connexin 26 mutations in hereditary non-syndromic sensorineural deafness.</title>
        <authorList>
            <person name="Kelsell D.P."/>
            <person name="Dunlop J."/>
            <person name="Stevens H.P."/>
            <person name="Lench N.J."/>
            <person name="Liang J.N."/>
            <person name="Parry G."/>
            <person name="Mueller R.F."/>
            <person name="Leigh I.M."/>
        </authorList>
    </citation>
    <scope>VARIANT DFNB1A THR-34</scope>
</reference>
<reference key="17">
    <citation type="journal article" date="1998" name="Nature">
        <title>Connexin mutations and hearing loss.</title>
        <authorList>
            <person name="Scott D.A."/>
            <person name="Kraft M.L."/>
            <person name="Tone M.M."/>
            <person name="Sheffield V.C."/>
            <person name="Smith R.J.H."/>
        </authorList>
    </citation>
    <scope>VARIANT DFNB1A THR-34</scope>
</reference>
<reference key="18">
    <citation type="journal article" date="1997" name="Hum. Mol. Genet.">
        <title>Two different connexin 26 mutations in an inbred kindred segregating non-syndromic recessive deafness: implications for genetic studies in isolated populations.</title>
        <authorList>
            <person name="Carrasquillo M.M."/>
            <person name="Zlotogora J."/>
            <person name="Barges S."/>
            <person name="Chakravarti A."/>
        </authorList>
    </citation>
    <scope>VARIANT DFNB1A ARG-77</scope>
</reference>
<reference key="19">
    <citation type="journal article" date="1997" name="Hum. Mol. Genet.">
        <title>Prelingual deafness: high prevalence of a 30delG mutation in the connexin 26 gene.</title>
        <authorList>
            <person name="Denoyelle F."/>
            <person name="Weil D."/>
            <person name="Maw M.A."/>
            <person name="Wilcox S.A."/>
            <person name="Lench N.J."/>
            <person name="Allen-Powell D.R."/>
            <person name="Osborn A.H."/>
            <person name="Dahl H.-H.M."/>
            <person name="Middleton A."/>
            <person name="Houseman M.J."/>
            <person name="Dode C."/>
            <person name="Marlin S."/>
            <person name="Boulila-ElGaied A."/>
            <person name="Grati M."/>
            <person name="Ayadi H."/>
            <person name="BenArab S."/>
            <person name="Bitoun P."/>
            <person name="Lina-Granade G."/>
            <person name="Godet J."/>
            <person name="Mustapha M."/>
            <person name="Loiselet J."/>
            <person name="El-Zir E."/>
            <person name="Aubois A."/>
            <person name="Joannard A."/>
            <person name="Levilliers J."/>
            <person name="Garabedian E.-N."/>
            <person name="Mueller R.F."/>
            <person name="McKinlay Gardner R.J."/>
            <person name="Petit C."/>
        </authorList>
    </citation>
    <scope>VARIANTS DFNB1A GLU-118 DEL AND PRO-184</scope>
</reference>
<reference key="20">
    <citation type="journal article" date="1998" name="Am. J. Hum. Genet.">
        <title>Novel mutations in the connexin 26 gene (GJB2) that cause autosomal recessive (DFNB1) hearing loss.</title>
        <authorList>
            <person name="Kelley P.M."/>
            <person name="Harris D.J."/>
            <person name="Comer B.C."/>
            <person name="Askew J.W."/>
            <person name="Fowler T."/>
            <person name="Smith S.D."/>
            <person name="Kimberling W.J."/>
        </authorList>
    </citation>
    <scope>VARIANTS DFNB1A LEU-84; MET-95 AND ARG-113</scope>
    <scope>VARIANTS ILE-27 AND ILE-37</scope>
</reference>
<reference key="21">
    <citation type="journal article" date="1998" name="Hum. Genet.">
        <title>Functional defects of Cx26 resulting from a heterozygous missense mutation in a family with dominant deaf-mutism and palmoplantar keratoderma.</title>
        <authorList>
            <person name="Richard G."/>
            <person name="White T.W."/>
            <person name="Smith L.E."/>
            <person name="Bailey R.A."/>
            <person name="Compton J.G."/>
            <person name="Paul D.L."/>
            <person name="Bale S.J."/>
        </authorList>
    </citation>
    <scope>VARIANT PPKDFN TRP-75</scope>
</reference>
<reference key="22">
    <citation type="journal article" date="1998" name="Hum. Mutat.">
        <title>Identification of mutations in the connexin 26 gene that cause autosomal recessive nonsyndromic hearing loss.</title>
        <authorList>
            <person name="Scott D.A."/>
            <person name="Kraft M.L."/>
            <person name="Carmi R."/>
            <person name="Ramesh A."/>
            <person name="Elbedour K."/>
            <person name="Yairi Y."/>
            <person name="Srikumari Srisailapathy C.R."/>
            <person name="Rosengren S.S."/>
            <person name="Markham A.F."/>
            <person name="Mueller R.F."/>
            <person name="Lench N.J."/>
            <person name="van Camp G."/>
            <person name="Smith R.J.H."/>
            <person name="Sheffield V.C."/>
        </authorList>
    </citation>
    <scope>VARIANTS LEU-83 AND SER-160</scope>
    <scope>VARIANT DFNB1A THR-34</scope>
</reference>
<reference key="23">
    <citation type="journal article" date="1998" name="Nature">
        <title>Connexin 26 gene linked to a dominant deafness.</title>
        <authorList>
            <person name="Denoyelle F."/>
            <person name="Lina-Granade G."/>
            <person name="Plauchu H."/>
            <person name="Bruzzone R."/>
            <person name="Chaib H."/>
            <person name="Levi-Acobas F."/>
            <person name="Weil D."/>
            <person name="Petit C."/>
        </authorList>
    </citation>
    <scope>VARIANT DFNA3A CYS-44</scope>
</reference>
<reference key="24">
    <citation type="journal article" date="1998" name="N. Engl. J. Med.">
        <title>Connexin 26 R143W mutation associated with recessive nonsyndromic sensorineural deafness in Africa.</title>
        <authorList>
            <person name="Brobby G.W."/>
            <person name="Muller-Myhsok B."/>
            <person name="Horstmann R.D."/>
        </authorList>
    </citation>
    <scope>VARIANT DFNB1A TRP-143</scope>
</reference>
<reference key="25">
    <citation type="journal article" date="1999" name="Hum. Mol. Genet.">
        <title>A missense mutation in connexin26, D66H, causes mutilating keratoderma with sensorineural deafness (Vohwinkel's syndrome) in three unrelated families.</title>
        <authorList>
            <person name="Maestrini E."/>
            <person name="Korge B.P."/>
            <person name="Ocana-Sierra J."/>
            <person name="Calzolari E."/>
            <person name="Cambiaghi S."/>
            <person name="Scudder P.M."/>
            <person name="Hovnanian A."/>
            <person name="Monaco A.P."/>
            <person name="Munro C.S."/>
        </authorList>
    </citation>
    <scope>VARIANT VOWNKL HIS-66</scope>
</reference>
<reference key="26">
    <citation type="journal article" date="2000" name="Am. J. Med. Genet.">
        <title>Novel mutations in the connexin 26 gene (GJB2) responsible for childhood deafness in the Japanese population.</title>
        <authorList>
            <person name="Kudo T."/>
            <person name="Ikeda K."/>
            <person name="Kure S."/>
            <person name="Matsubara Y."/>
            <person name="Oshima T."/>
            <person name="Watanabe K."/>
            <person name="Kawase T."/>
            <person name="Narisawa K."/>
            <person name="Takasaka T."/>
        </authorList>
    </citation>
    <scope>VARIANTS ILE-27; ILE-37; GLY-114 AND THR-203</scope>
</reference>
<reference key="27">
    <citation type="journal article" date="2000" name="Eur. J. Hum. Genet.">
        <title>Connexin mutations associated with palmoplantar keratoderma and profound deafness in a single family.</title>
        <authorList>
            <person name="Kelsell D.P."/>
            <person name="Wilgoss A.L."/>
            <person name="Richard G."/>
            <person name="Stevens H.P."/>
            <person name="Munro C.S."/>
            <person name="Leigh I.M."/>
        </authorList>
    </citation>
    <scope>VARIANT PPKDFN HIS-66</scope>
</reference>
<reference key="28">
    <citation type="journal article" date="2000" name="Hum. Genet.">
        <title>High frequency hearing loss correlated with mutations in the GJB2 gene.</title>
        <authorList>
            <person name="Wilcox S.A."/>
            <person name="Saunders K."/>
            <person name="Osborn A.H."/>
            <person name="Arnold A."/>
            <person name="Wunderlich J."/>
            <person name="Kelly T."/>
            <person name="Collins V."/>
            <person name="Wilcox L.J."/>
            <person name="McKinlay Gardner R.J."/>
            <person name="Kamarinos M."/>
            <person name="Cone-Wesson B."/>
            <person name="Williamson R."/>
            <person name="Dahl H.-H.M."/>
        </authorList>
    </citation>
    <scope>VARIANTS DFNB1A ILE-37; PRO-90 AND TRP-184</scope>
</reference>
<reference key="29">
    <citation type="journal article" date="2000" name="J. Med. Genet.">
        <title>A connexin 26 mutation causes a syndrome of sensorineural hearing loss and palmoplantar hyperkeratosis (MIM 148350).</title>
        <authorList>
            <person name="Heathcote K."/>
            <person name="Syrris P."/>
            <person name="Carter N.D."/>
            <person name="Patton M.A."/>
        </authorList>
    </citation>
    <scope>VARIANT PPKDFN ALA-59</scope>
</reference>
<reference key="30">
    <citation type="journal article" date="2000" name="J. Med. Genet.">
        <title>A novel C202F mutation in the connexin26 gene (GJB2) associated with autosomal dominant isolated hearing loss.</title>
        <authorList>
            <person name="Morle L."/>
            <person name="Bozon M."/>
            <person name="Alloisio N."/>
            <person name="Latour P."/>
            <person name="Vandenberghe A."/>
            <person name="Plauchu H."/>
            <person name="Collet L."/>
            <person name="Edery P."/>
            <person name="Godet J."/>
            <person name="Lina-Granade G."/>
        </authorList>
    </citation>
    <scope>VARIANT DFNA3A PHE-202</scope>
</reference>
<reference key="31">
    <citation type="journal article" date="2001" name="Eur. J. Hum. Genet.">
        <title>Sensorineural hearing loss and the incidence of Cx26 mutations in Austria.</title>
        <authorList>
            <person name="Loffler J."/>
            <person name="Nekahm D."/>
            <person name="Hirst-Stadlmann A."/>
            <person name="Gunther B."/>
            <person name="Menzel H.J."/>
            <person name="Utermann G."/>
            <person name="Janecke A.R."/>
        </authorList>
    </citation>
    <scope>VARIANT DFNB1A PRO-90</scope>
    <scope>VARIANT DFNA3A GLN-143</scope>
</reference>
<reference key="32">
    <citation type="journal article" date="2002" name="Am. J. Hum. Genet.">
        <title>Missense mutations in GJB2 encoding connexin-26 cause the ectodermal dysplasia keratitis-ichthyosis-deafness syndrome.</title>
        <authorList>
            <person name="Richard G."/>
            <person name="Rouan F."/>
            <person name="Willoughby C.E."/>
            <person name="Brown N."/>
            <person name="Chung P."/>
            <person name="Ryynanen M."/>
            <person name="Jabs E.W."/>
            <person name="Bale S.J."/>
            <person name="DiGiovanna J.J."/>
            <person name="Uitto J."/>
            <person name="Russell L."/>
        </authorList>
    </citation>
    <scope>VARIANTS KIDAD ARG-12; PHE-17 AND ASN-50</scope>
</reference>
<reference key="33">
    <citation type="journal article" date="2002" name="Am. J. Med. Genet.">
        <title>Exploring the clinical and epidemiological complexity of GJB2-linked deafness.</title>
        <authorList>
            <person name="Gualandi F."/>
            <person name="Ravani A."/>
            <person name="Berto A."/>
            <person name="Sensi A."/>
            <person name="Trabanelli C."/>
            <person name="Falciano F."/>
            <person name="Trevisi P."/>
            <person name="Mazzoli M."/>
            <person name="Tibiletti M.G."/>
            <person name="Cristofari E."/>
            <person name="Burdo S."/>
            <person name="Ferlini A."/>
            <person name="Martini A."/>
            <person name="Calzolari E."/>
        </authorList>
    </citation>
    <scope>VARIANT DFNB1A VAL-159</scope>
</reference>
<reference key="34">
    <citation type="journal article" date="2002" name="Br. J. Dermatol.">
        <title>HID and KID syndromes are associated with the same connexin 26 mutation.</title>
        <authorList>
            <person name="van Geel M."/>
            <person name="van Steensel M.A.M."/>
            <person name="Kuester W."/>
            <person name="Hennies H.C."/>
            <person name="Happle R."/>
            <person name="Steijlen P.M."/>
            <person name="Koenig A."/>
        </authorList>
    </citation>
    <scope>VARIANT HID SYNDROME ASN-50</scope>
</reference>
<reference key="35">
    <citation type="journal article" date="2002" name="Clin. Genet.">
        <title>Homozygosity for the V37I Connexin 26 mutation in three unrelated children with sensorineural hearing loss.</title>
        <authorList>
            <person name="Bason L."/>
            <person name="Dudley T."/>
            <person name="Lewis K."/>
            <person name="Shah U."/>
            <person name="Potsic W."/>
            <person name="Ferraris A."/>
            <person name="Fortina P."/>
            <person name="Rappaport E."/>
            <person name="Krantz I.D."/>
        </authorList>
    </citation>
    <scope>VARIANT DFNB1A ILE-37</scope>
</reference>
<reference key="36">
    <citation type="journal article" date="2002" name="Clin. Genet.">
        <title>The novel R75Q mutation in the GJB2 gene causes autosomal dominant hearing loss and palmoplantar keratoderma in a Turkish family.</title>
        <authorList>
            <person name="Uyguner O."/>
            <person name="Tukel T."/>
            <person name="Baykal C."/>
            <person name="Eris H."/>
            <person name="Emiroglu M."/>
            <person name="Hafiz G."/>
            <person name="Ghanbari A."/>
            <person name="Baserer N."/>
            <person name="Yuksel-Apak M."/>
            <person name="Wollnik B."/>
        </authorList>
    </citation>
    <scope>VARIANT PPKDFN GLN-75</scope>
</reference>
<reference key="37">
    <citation type="journal article" date="2003" name="Am. J. Med. Genet. A">
        <title>De novo mutation in the gene encoding connexin-26 (GJB2) in a sporadic case of keratitis-ichthyosis-deafness (KID) syndrome.</title>
        <authorList>
            <person name="Alvarez A."/>
            <person name="Del Castillo I."/>
            <person name="Pera A."/>
            <person name="Villamar M."/>
            <person name="Moreno-Pelayo M.A."/>
            <person name="Moreno F."/>
            <person name="Moreno R."/>
            <person name="Tapia M.C."/>
        </authorList>
    </citation>
    <scope>VARIANT KIDAD ASN-50</scope>
</reference>
<reference key="38">
    <citation type="journal article" date="2003" name="Br. J. Dermatol.">
        <title>Novel mutations in GJB2 encoding connexin-26 in Japanese patients with keratitis-ichthyosis-deafness syndrome.</title>
        <authorList>
            <person name="Yotsumoto S."/>
            <person name="Hashiguchi T."/>
            <person name="Chen X."/>
            <person name="Ohtake N."/>
            <person name="Tomitaka A."/>
            <person name="Akamatsu H."/>
            <person name="Matsunaga K."/>
            <person name="Shiraishi S."/>
            <person name="Miura H."/>
            <person name="Adachi J."/>
            <person name="Kanzaki T."/>
        </authorList>
    </citation>
    <scope>VARIANTS KIDAD ASN-50 AND TYR-50</scope>
</reference>
<reference key="39">
    <citation type="journal article" date="2003" name="Clin. Genet.">
        <title>A novel dominant missense mutation -- D179N -- in the GJB2 gene (connexin 26) associated with non-syndromic hearing loss.</title>
        <authorList>
            <person name="Primignani P."/>
            <person name="Castorina P."/>
            <person name="Sironi F."/>
            <person name="Curcio C."/>
            <person name="Ambrosetti U."/>
            <person name="Coviello D.A."/>
        </authorList>
    </citation>
    <scope>VARIANT DFNA3A ASN-179</scope>
    <scope>VARIANT DFNB1A ILE-37</scope>
</reference>
<reference key="40">
    <citation type="journal article" date="2003" name="Hum. Genet.">
        <title>GJB2 deafness gene shows a specific spectrum of mutations in Japan, including a frequent founder mutation.</title>
        <authorList>
            <person name="Ohtsuka A."/>
            <person name="Yuge I."/>
            <person name="Kimura S."/>
            <person name="Namba A."/>
            <person name="Abe S."/>
            <person name="Van Laer L."/>
            <person name="Van Camp G."/>
            <person name="Usami S."/>
        </authorList>
    </citation>
    <scope>VARIANTS DFNB1A ILE-37; GLU-45; THR-71; ARG-86; TRP-143 AND LEU-191</scope>
    <scope>VARIANTS ILE-27; GLY-114; ASN-123 AND THR-203</scope>
</reference>
<reference key="41">
    <citation type="journal article" date="2003" name="Hum. Mol. Genet.">
        <title>Mutations in the gene for connexin 26 (GJB2) that cause hearing loss have a dominant negative effect on connexin 30.</title>
        <authorList>
            <person name="Marziano N.K."/>
            <person name="Casalotti S.O."/>
            <person name="Portelli A.E."/>
            <person name="Becker D.L."/>
            <person name="Forge A."/>
        </authorList>
    </citation>
    <scope>CHARACTERIZATION OF VARIANTS DFNA3A SER-44 AND TRP-75</scope>
    <scope>CHARACTERIZATION OF VARIANT PPKDFN ALA-59</scope>
    <scope>CHARACTERIZATION OF VARIANT VOWNKL HIS-66</scope>
</reference>
<reference key="42">
    <citation type="journal article" date="2003" name="J. Med. Genet.">
        <title>Contribution of connexin26 (GJB2) mutations and founder effect to non-syndromic hearing loss in India.</title>
        <authorList>
            <person name="Ramshankar M."/>
            <person name="Girirajan S."/>
            <person name="Dagan O."/>
            <person name="Ravi Shankar H.M."/>
            <person name="Jalvi R."/>
            <person name="Rangasayee R."/>
            <person name="Avraham K.B."/>
            <person name="Anand A."/>
        </authorList>
    </citation>
    <scope>VARIANTS ILE-27; THR-111; GLY-114; HIS-127; ILE-153 AND TRP-165</scope>
</reference>
<reference key="43">
    <citation type="journal article" date="2004" name="Eur. J. Hum. Genet.">
        <title>Clinical evidence of the nonpathogenic nature of the M34T variant in the connexin 26 gene.</title>
        <authorList>
            <person name="Feldmann D."/>
            <person name="Denoyelle F."/>
            <person name="Loundon N."/>
            <person name="Weil D."/>
            <person name="Garabedian E.N."/>
            <person name="Couderc R."/>
            <person name="Joannard A."/>
            <person name="Schmerber S."/>
            <person name="Delobel B."/>
            <person name="Leman J."/>
            <person name="Journel H."/>
            <person name="Catros H."/>
            <person name="Ferrec C."/>
            <person name="Drouin-Garraud V."/>
            <person name="Obstoy M.F."/>
            <person name="Moati L."/>
            <person name="Petit C."/>
            <person name="Marlin S."/>
        </authorList>
    </citation>
    <scope>VARIANT DFNB1A THR-34</scope>
</reference>
<reference key="44">
    <citation type="journal article" date="2004" name="J. Invest. Dermatol.">
        <title>Expanding the phenotypic spectrum of Cx26 disorders: Bart-Pumphrey syndrome is caused by a novel missense mutation in GJB2.</title>
        <authorList>
            <person name="Richard G."/>
            <person name="Brown N."/>
            <person name="Ishida-Yamamoto A."/>
            <person name="Krol A."/>
        </authorList>
    </citation>
    <scope>VARIANT BAPS LYS-54</scope>
</reference>
<reference key="45">
    <citation type="journal article" date="2005" name="Am. J. Med. Genet. A">
        <title>G59S mutation in the GJB2 (connexin 26) gene in a patient with Bart-Pumphrey syndrome.</title>
        <authorList>
            <person name="Alexandrino F."/>
            <person name="Sartorato E.L."/>
            <person name="Marques-de-Faria A.P."/>
            <person name="Steiner C.E."/>
        </authorList>
    </citation>
    <scope>VARIANT BAPS SER-59</scope>
</reference>
<reference key="46">
    <citation type="journal article" date="2005" name="Clin. Genet.">
        <title>Functional analysis of R75Q mutation in the gene coding for Connexin 26 identified in a family with nonsyndromic hearing loss.</title>
        <authorList>
            <person name="Piazza V."/>
            <person name="Beltramello M."/>
            <person name="Menniti M."/>
            <person name="Colao E."/>
            <person name="Malatesta P."/>
            <person name="Argento R."/>
            <person name="Chiarella G."/>
            <person name="Gallo L.V."/>
            <person name="Catalano M."/>
            <person name="Perrotti N."/>
            <person name="Mammano F."/>
            <person name="Cassandro E."/>
        </authorList>
    </citation>
    <scope>VARIANT PPKDFN GLN-75</scope>
    <scope>CHARACTERIZATION OF VARIANT PPKDFN GLN-75</scope>
</reference>
<reference key="47">
    <citation type="journal article" date="2005" name="Hum. Mutat.">
        <title>Mutation analysis of the GJB2 (connexin 26) gene in Egypt.</title>
        <authorList>
            <person name="Snoeckx R.L."/>
            <person name="Hassan D.M."/>
            <person name="Kamal N.M."/>
            <person name="Van Den Bogaert K."/>
            <person name="Van Camp G."/>
        </authorList>
    </citation>
    <scope>VARIANT VOWNKL VAL-130</scope>
    <scope>VARIANTS HIS-117; PHE-142 DEL AND PRO-148</scope>
</reference>
<reference key="48">
    <citation type="journal article" date="2005" name="J. Hum. Genet.">
        <title>Clinical features of patients with GJB2 (connexin 26) mutations: severity of hearing loss is correlated with genotypes and protein expression patterns.</title>
        <authorList>
            <person name="Oguchi T."/>
            <person name="Ohtsuka A."/>
            <person name="Hashimoto S."/>
            <person name="Oshima A."/>
            <person name="Abe S."/>
            <person name="Kobayashi Y."/>
            <person name="Nagai K."/>
            <person name="Matsunaga T."/>
            <person name="Iwasaki S."/>
            <person name="Nakagawa T."/>
            <person name="Usami S.I."/>
        </authorList>
    </citation>
    <scope>VARIANTS DFNB1A ILE-37; GLU-45; ARG-86; TRP-143 AND LEU-191</scope>
    <scope>VARIANT ASN-123</scope>
</reference>
<reference key="49">
    <citation type="journal article" date="2005" name="Nat. Cell Biol.">
        <title>Impaired permeability to Ins(1,4,5)P3 in a mutant connexin underlies recessive hereditary deafness.</title>
        <authorList>
            <person name="Beltramello M."/>
            <person name="Piazza V."/>
            <person name="Bukauskas F.F."/>
            <person name="Pozzan T."/>
            <person name="Mammano F."/>
        </authorList>
    </citation>
    <scope>CHARACTERIZATION OF VARIANT DFNB1A LEU-84</scope>
</reference>
<reference key="50">
    <citation type="journal article" date="2006" name="Hum. Mol. Genet.">
        <title>Pathogenetic role of the deafness-related M34T mutation of Cx26.</title>
        <authorList>
            <person name="Bicego M."/>
            <person name="Beltramello M."/>
            <person name="Melchionda S."/>
            <person name="Carella M."/>
            <person name="Piazza V."/>
            <person name="Zelante L."/>
            <person name="Bukauskas F.F."/>
            <person name="Arslan E."/>
            <person name="Cama E."/>
            <person name="Pantano S."/>
            <person name="Bruzzone R."/>
            <person name="D'Andrea P."/>
            <person name="Mammano F."/>
        </authorList>
    </citation>
    <scope>CHARACTERIZATION OF VARIANT DFNB1A THR-34</scope>
    <scope>PATHOGENIC ROLE OF VARIANT DFNB1A THR-34</scope>
    <scope>FUNCTION</scope>
    <scope>SUBCELLULAR LOCATION</scope>
</reference>
<reference key="51">
    <citation type="journal article" date="2007" name="Am. J. Med. Genet. A">
        <title>M34T and V37I mutations in GJB2 associated hearing impairment: evidence for pathogenicity and reduced penetrance.</title>
        <authorList>
            <person name="Pollak A."/>
            <person name="Skorka A."/>
            <person name="Mueller-Malesinska M."/>
            <person name="Kostrzewa G."/>
            <person name="Kisiel B."/>
            <person name="Waligora J."/>
            <person name="Krajewski P."/>
            <person name="Oldak M."/>
            <person name="Korniszewski L."/>
            <person name="Skarzynski H."/>
            <person name="Ploski R."/>
        </authorList>
    </citation>
    <scope>VARIANTS DFNB1A THR-34 AND ILE-37</scope>
</reference>
<reference key="52">
    <citation type="journal article" date="2007" name="Genet. Med.">
        <title>A multicenter study of the frequency and distribution of GJB2 and GJB6 mutations in a large North American cohort.</title>
        <authorList>
            <person name="Putcha G.V."/>
            <person name="Bejjani B.A."/>
            <person name="Bleoo S."/>
            <person name="Booker J.K."/>
            <person name="Carey J.C."/>
            <person name="Carson N."/>
            <person name="Das S."/>
            <person name="Dempsey M.A."/>
            <person name="Gastier-Foster J.M."/>
            <person name="Greinwald J.H. Jr."/>
            <person name="Hoffmann M.L."/>
            <person name="Jeng L.J."/>
            <person name="Kenna M.A."/>
            <person name="Khababa I."/>
            <person name="Lilley M."/>
            <person name="Mao R."/>
            <person name="Muralidharan K."/>
            <person name="Otani I.M."/>
            <person name="Rehm H.L."/>
            <person name="Schaefer F."/>
            <person name="Seltzer W.K."/>
            <person name="Spector E.B."/>
            <person name="Springer M.A."/>
            <person name="Weck K.E."/>
            <person name="Wenstrup R.J."/>
            <person name="Withrow S."/>
            <person name="Wu B.L."/>
            <person name="Zariwala M.A."/>
            <person name="Schrijver I."/>
        </authorList>
    </citation>
    <scope>VARIANT DFNB1A ASP-130</scope>
</reference>
<reference key="53">
    <citation type="journal article" date="2007" name="J. Med. Genet.">
        <title>A novel hearing-loss-related mutation occurring in the GJB2 basal promoter.</title>
        <authorList>
            <person name="Matos T.D."/>
            <person name="Caria H."/>
            <person name="Simoes-Teixeira H."/>
            <person name="Aasen T."/>
            <person name="Nickel R."/>
            <person name="Jagger D.J."/>
            <person name="O'Neill A."/>
            <person name="Kelsell D.P."/>
            <person name="Fialho G."/>
        </authorList>
    </citation>
    <scope>VARIANT DFNB1A MET-84</scope>
    <scope>CHARACTERIZATION OF VARIANT DFNB1A MET-84</scope>
</reference>
<reference key="54">
    <citation type="journal article" date="2008" name="J. Med. Genet.">
        <title>A novel missense mutation in GJB2 disturbs gap junction protein transport and causes focal palmoplantar keratoderma with deafness.</title>
        <authorList>
            <person name="de Zwart-Storm E.A."/>
            <person name="Hamm H."/>
            <person name="Stoevesandt J."/>
            <person name="Steijlen P.M."/>
            <person name="Martin P.E."/>
            <person name="van Geel M."/>
            <person name="van Steensel M.A.M."/>
        </authorList>
    </citation>
    <scope>VARIANT PPKDFN ARG-73</scope>
    <scope>CHARACTERIZATION OF VARIANT PPKDFN ARG-73</scope>
</reference>
<reference key="55">
    <citation type="journal article" date="2009" name="Am. J. Med. Genet. A">
        <title>Connexin mutations in Brazilian patients with skin disorders with or without hearing loss.</title>
        <authorList>
            <person name="Alexandrino F."/>
            <person name="de Oliveira C.A."/>
            <person name="Magalhaes R.F."/>
            <person name="Florence M.E."/>
            <person name="de Souza E.M."/>
            <person name="Sartorato E.L."/>
        </authorList>
    </citation>
    <scope>VARIANT ARG-168</scope>
</reference>
<reference key="56">
    <citation type="journal article" date="2009" name="Am. J. Med. Genet. A">
        <title>New evidence for the correlation of the p.G130V mutation in the GJB2 gene and syndromic hearing loss with palmoplantar keratoderma.</title>
        <authorList>
            <person name="Iossa S."/>
            <person name="Chinetti V."/>
            <person name="Auletta G."/>
            <person name="Laria C."/>
            <person name="De Luca M."/>
            <person name="Rienzo M."/>
            <person name="Giannini P."/>
            <person name="Delfino M."/>
            <person name="Ciccodicola A."/>
            <person name="Marciano E."/>
            <person name="Franze A."/>
        </authorList>
    </citation>
    <scope>VARIANT VOWNKL VAL-130</scope>
</reference>
<reference key="57">
    <citation type="journal article" date="2009" name="Br. J. Dermatol.">
        <title>Novel mutation p.Gly59Arg in GJB6 encoding connexin 30 underlies palmoplantar keratoderma with pseudoainhum, knuckle pads and hearing loss.</title>
        <authorList>
            <person name="Nemoto-Hasebe I."/>
            <person name="Akiyama M."/>
            <person name="Kudo S."/>
            <person name="Ishiko A."/>
            <person name="Tanaka A."/>
            <person name="Arita K."/>
            <person name="Shimizu H."/>
        </authorList>
    </citation>
    <scope>VARIANT ILE-27</scope>
</reference>
<reference key="58">
    <citation type="journal article" date="2009" name="Hum. Mutat.">
        <title>Different functional consequences of two missense mutations in the GJB2 gene associated with non-syndromic hearing loss.</title>
        <authorList>
            <person name="Choi S.-Y."/>
            <person name="Park H.-J."/>
            <person name="Lee K.Y."/>
            <person name="Dinh E.H."/>
            <person name="Chang Q."/>
            <person name="Ahmad S."/>
            <person name="Lee S.H."/>
            <person name="Bok J."/>
            <person name="Lin X."/>
            <person name="Kim U.-K."/>
        </authorList>
    </citation>
    <scope>VARIANT DFNA3A GLU-46</scope>
    <scope>VARIANT DFNB1A ARG-86</scope>
    <scope>CHARACTERIZATION OF VARIANT DFNA3A GLU-46</scope>
    <scope>CHARACTERIZATION OF VARIANT DFNB1A ARG-86</scope>
    <scope>FUNCTION</scope>
    <scope>SUBCELLULAR LOCATION</scope>
</reference>
<reference key="59">
    <citation type="journal article" date="2013" name="Gene">
        <title>Update of the spectrum of GJB2 gene mutations in Tunisian families with autosomal recessive nonsyndromic hearing loss.</title>
        <authorList>
            <person name="Riahi Z."/>
            <person name="Hammami H."/>
            <person name="Ouragini H."/>
            <person name="Messai H."/>
            <person name="Zainine R."/>
            <person name="Bouyacoub Y."/>
            <person name="Romdhane L."/>
            <person name="Essaid D."/>
            <person name="Kefi R."/>
            <person name="Rhimi M."/>
            <person name="Bedoui M."/>
            <person name="Dhaouadi A."/>
            <person name="Feldmann D."/>
            <person name="Jonard L."/>
            <person name="Besbes G."/>
            <person name="Abdelhak S."/>
        </authorList>
    </citation>
    <scope>VARIANTS DFNB1A ILE-37 AND ALA-130</scope>
</reference>
<reference key="60">
    <citation type="journal article" date="2017" name="Genet. Test. Mol. Biomarkers">
        <title>Molecular Analysis of Twelve Pakistani Families with Nonsyndromic or Syndromic Hearing Loss.</title>
        <authorList>
            <person name="Wang R."/>
            <person name="Han S."/>
            <person name="Khan A."/>
            <person name="Zhang X."/>
        </authorList>
    </citation>
    <scope>INVOLVEMENT IN DFNB1A</scope>
</reference>
<reference key="61">
    <citation type="journal article" date="2019" name="Eur. J. Hum. Genet.">
        <title>Hearing impairment locus heterogeneity and identification of PLS1 as a new autosomal dominant gene in Hungarian Roma.</title>
        <authorList>
            <person name="Schrauwen I."/>
            <person name="Melegh B.I."/>
            <person name="Chakchouk I."/>
            <person name="Acharya A."/>
            <person name="Nasir A."/>
            <person name="Poston A."/>
            <person name="Cornejo-Sanchez D.M."/>
            <person name="Szabo Z."/>
            <person name="Karosi T."/>
            <person name="Bene J."/>
            <person name="Melegh B."/>
            <person name="Leal S.M."/>
        </authorList>
    </citation>
    <scope>VARIANT DFNB1A 24-TRP--VAL-226 DEL</scope>
</reference>
<reference key="62">
    <citation type="journal article" date="2019" name="Genet. Med.">
        <title>Consensus interpretation of the p.Met34Thr and p.Val37Ile variants in GJB2 by the ClinGen Hearing Loss Expert Panel.</title>
        <authorList>
            <consortium name="ClinGen Hearing Loss Working Group"/>
            <person name="Shen J."/>
            <person name="Oza A.M."/>
            <person name="Del Castillo I."/>
            <person name="Duzkale H."/>
            <person name="Matsunaga T."/>
            <person name="Pandya A."/>
            <person name="Kang H.P."/>
            <person name="Mar-Heyming R."/>
            <person name="Guha S."/>
            <person name="Moyer K."/>
            <person name="Lo C."/>
            <person name="Kenna M."/>
            <person name="Alexander J.J."/>
            <person name="Zhang Y."/>
            <person name="Hirsch Y."/>
            <person name="Luo M."/>
            <person name="Cao Y."/>
            <person name="Wai Choy K."/>
            <person name="Cheng Y.F."/>
            <person name="Avraham K.B."/>
            <person name="Hu X."/>
            <person name="Garrido G."/>
            <person name="Moreno-Pelayo M.A."/>
            <person name="Greinwald J."/>
            <person name="Zhang K."/>
            <person name="Zeng Y."/>
            <person name="Brownstein Z."/>
            <person name="Basel-Salmon L."/>
            <person name="Davidov B."/>
            <person name="Frydman M."/>
            <person name="Weiden T."/>
            <person name="Nagan N."/>
            <person name="Willis A."/>
            <person name="Hemphill S.E."/>
            <person name="Grant A.R."/>
            <person name="Siegert R.K."/>
            <person name="DiStefano M.T."/>
            <person name="Amr S.S."/>
            <person name="Rehm H.L."/>
            <person name="Abou Tayoun A.N."/>
        </authorList>
    </citation>
    <scope>CONFIRMED PATHOGENICITY OF VARIANTS DFNB1A THR-34 AND ILE-37</scope>
</reference>
<name>CXB2_HUMAN</name>
<evidence type="ECO:0000250" key="1">
    <source>
        <dbReference type="UniProtKB" id="Q00977"/>
    </source>
</evidence>
<evidence type="ECO:0000269" key="2">
    <source>
    </source>
</evidence>
<evidence type="ECO:0000269" key="3">
    <source>
    </source>
</evidence>
<evidence type="ECO:0000269" key="4">
    <source>
    </source>
</evidence>
<evidence type="ECO:0000269" key="5">
    <source>
    </source>
</evidence>
<evidence type="ECO:0000269" key="6">
    <source>
    </source>
</evidence>
<evidence type="ECO:0000269" key="7">
    <source>
    </source>
</evidence>
<evidence type="ECO:0000269" key="8">
    <source>
    </source>
</evidence>
<evidence type="ECO:0000269" key="9">
    <source>
    </source>
</evidence>
<evidence type="ECO:0000269" key="10">
    <source>
    </source>
</evidence>
<evidence type="ECO:0000269" key="11">
    <source>
    </source>
</evidence>
<evidence type="ECO:0000269" key="12">
    <source>
    </source>
</evidence>
<evidence type="ECO:0000269" key="13">
    <source>
    </source>
</evidence>
<evidence type="ECO:0000269" key="14">
    <source>
    </source>
</evidence>
<evidence type="ECO:0000269" key="15">
    <source>
    </source>
</evidence>
<evidence type="ECO:0000269" key="16">
    <source>
    </source>
</evidence>
<evidence type="ECO:0000269" key="17">
    <source>
    </source>
</evidence>
<evidence type="ECO:0000269" key="18">
    <source>
    </source>
</evidence>
<evidence type="ECO:0000269" key="19">
    <source>
    </source>
</evidence>
<evidence type="ECO:0000269" key="20">
    <source>
    </source>
</evidence>
<evidence type="ECO:0000269" key="21">
    <source>
    </source>
</evidence>
<evidence type="ECO:0000269" key="22">
    <source>
    </source>
</evidence>
<evidence type="ECO:0000269" key="23">
    <source>
    </source>
</evidence>
<evidence type="ECO:0000269" key="24">
    <source>
    </source>
</evidence>
<evidence type="ECO:0000269" key="25">
    <source>
    </source>
</evidence>
<evidence type="ECO:0000269" key="26">
    <source>
    </source>
</evidence>
<evidence type="ECO:0000269" key="27">
    <source>
    </source>
</evidence>
<evidence type="ECO:0000269" key="28">
    <source>
    </source>
</evidence>
<evidence type="ECO:0000269" key="29">
    <source>
    </source>
</evidence>
<evidence type="ECO:0000269" key="30">
    <source>
    </source>
</evidence>
<evidence type="ECO:0000269" key="31">
    <source>
    </source>
</evidence>
<evidence type="ECO:0000269" key="32">
    <source>
    </source>
</evidence>
<evidence type="ECO:0000269" key="33">
    <source>
    </source>
</evidence>
<evidence type="ECO:0000269" key="34">
    <source>
    </source>
</evidence>
<evidence type="ECO:0000269" key="35">
    <source>
    </source>
</evidence>
<evidence type="ECO:0000269" key="36">
    <source>
    </source>
</evidence>
<evidence type="ECO:0000269" key="37">
    <source>
    </source>
</evidence>
<evidence type="ECO:0000269" key="38">
    <source>
    </source>
</evidence>
<evidence type="ECO:0000269" key="39">
    <source>
    </source>
</evidence>
<evidence type="ECO:0000269" key="40">
    <source>
    </source>
</evidence>
<evidence type="ECO:0000269" key="41">
    <source>
    </source>
</evidence>
<evidence type="ECO:0000269" key="42">
    <source>
    </source>
</evidence>
<evidence type="ECO:0000269" key="43">
    <source>
    </source>
</evidence>
<evidence type="ECO:0000269" key="44">
    <source>
    </source>
</evidence>
<evidence type="ECO:0000269" key="45">
    <source>
    </source>
</evidence>
<evidence type="ECO:0000269" key="46">
    <source>
    </source>
</evidence>
<evidence type="ECO:0000269" key="47">
    <source>
    </source>
</evidence>
<evidence type="ECO:0000269" key="48">
    <source>
    </source>
</evidence>
<evidence type="ECO:0000269" key="49">
    <source>
    </source>
</evidence>
<evidence type="ECO:0000269" key="50">
    <source>
    </source>
</evidence>
<evidence type="ECO:0000269" key="51">
    <source>
    </source>
</evidence>
<evidence type="ECO:0000269" key="52">
    <source>
    </source>
</evidence>
<evidence type="ECO:0000269" key="53">
    <source>
    </source>
</evidence>
<evidence type="ECO:0000269" key="54">
    <source>
    </source>
</evidence>
<evidence type="ECO:0000269" key="55">
    <source>
    </source>
</evidence>
<evidence type="ECO:0000269" key="56">
    <source ref="6"/>
</evidence>
<evidence type="ECO:0000303" key="57">
    <source>
    </source>
</evidence>
<evidence type="ECO:0000303" key="58">
    <source>
    </source>
</evidence>
<evidence type="ECO:0000305" key="59"/>
<evidence type="ECO:0000305" key="60">
    <source>
    </source>
</evidence>
<evidence type="ECO:0007744" key="61">
    <source>
        <dbReference type="PDB" id="2ZW3"/>
    </source>
</evidence>
<evidence type="ECO:0007744" key="62">
    <source>
        <dbReference type="PDB" id="3IZ1"/>
    </source>
</evidence>
<evidence type="ECO:0007744" key="63">
    <source>
        <dbReference type="PDB" id="3IZ2"/>
    </source>
</evidence>
<evidence type="ECO:0007744" key="64">
    <source>
        <dbReference type="PDB" id="5ER7"/>
    </source>
</evidence>
<evidence type="ECO:0007744" key="65">
    <source>
        <dbReference type="PDB" id="5ERA"/>
    </source>
</evidence>
<evidence type="ECO:0007829" key="66">
    <source>
        <dbReference type="PDB" id="2ZW3"/>
    </source>
</evidence>
<evidence type="ECO:0007829" key="67">
    <source>
        <dbReference type="PDB" id="5ER7"/>
    </source>
</evidence>
<evidence type="ECO:0007829" key="68">
    <source>
        <dbReference type="PDB" id="7QEQ"/>
    </source>
</evidence>
<evidence type="ECO:0007829" key="69">
    <source>
        <dbReference type="PDB" id="8QA1"/>
    </source>
</evidence>
<evidence type="ECO:0007829" key="70">
    <source>
        <dbReference type="PDB" id="8QA2"/>
    </source>
</evidence>
<sequence>MDWGTLQTILGGVNKHSTSIGKIWLTVLFIFRIMILVVAAKEVWGDEQADFVCNTLQPGCKNVCYDHYFPISHIRLWALQLIFVSTPALLVAMHVAYRRHEKKRKFIKGEIKSEFKDIEEIKTQKVRIEGSLWWTYTSSIFFRVIFEAAFMYVFYVMYDGFSMQRLVKCNAWPCPNTVDCFVSRPTEKTVFTVFMIAVSGICILLNVTELCYLLIRYCSGKSKKPV</sequence>
<feature type="chain" id="PRO_0000057855" description="Gap junction beta-2 protein">
    <location>
        <begin position="1"/>
        <end position="226"/>
    </location>
</feature>
<feature type="intramembrane region" evidence="45">
    <location>
        <begin position="2"/>
        <end position="13"/>
    </location>
</feature>
<feature type="topological domain" description="Cytoplasmic" evidence="45">
    <location>
        <begin position="14"/>
        <end position="20"/>
    </location>
</feature>
<feature type="transmembrane region" description="Helical" evidence="45">
    <location>
        <begin position="21"/>
        <end position="40"/>
    </location>
</feature>
<feature type="topological domain" description="Extracellular" evidence="45">
    <location>
        <begin position="41"/>
        <end position="73"/>
    </location>
</feature>
<feature type="transmembrane region" description="Helical" evidence="45">
    <location>
        <begin position="74"/>
        <end position="94"/>
    </location>
</feature>
<feature type="topological domain" description="Cytoplasmic" evidence="45">
    <location>
        <begin position="95"/>
        <end position="135"/>
    </location>
</feature>
<feature type="transmembrane region" description="Helical" evidence="45">
    <location>
        <begin position="136"/>
        <end position="156"/>
    </location>
</feature>
<feature type="topological domain" description="Extracellular" evidence="45">
    <location>
        <begin position="157"/>
        <end position="189"/>
    </location>
</feature>
<feature type="transmembrane region" description="Helical" evidence="45">
    <location>
        <begin position="190"/>
        <end position="210"/>
    </location>
</feature>
<feature type="topological domain" description="Cytoplasmic" evidence="45">
    <location>
        <begin position="211"/>
        <end position="226"/>
    </location>
</feature>
<feature type="binding site" description="in other chain" evidence="60 64">
    <location>
        <position position="42"/>
    </location>
    <ligand>
        <name>Ca(2+)</name>
        <dbReference type="ChEBI" id="CHEBI:29108"/>
        <note>ligand shared between two neighboring subunits</note>
    </ligand>
</feature>
<feature type="binding site" evidence="60 64">
    <location>
        <position position="45"/>
    </location>
    <ligand>
        <name>Ca(2+)</name>
        <dbReference type="ChEBI" id="CHEBI:29108"/>
        <note>ligand shared between two neighboring subunits</note>
    </ligand>
</feature>
<feature type="binding site" evidence="60 64">
    <location>
        <position position="47"/>
    </location>
    <ligand>
        <name>Ca(2+)</name>
        <dbReference type="ChEBI" id="CHEBI:29108"/>
        <note>ligand shared between two neighboring subunits</note>
    </ligand>
</feature>
<feature type="disulfide bond" evidence="39 45 61 64 65">
    <location>
        <begin position="53"/>
        <end position="180"/>
    </location>
</feature>
<feature type="disulfide bond" evidence="39 45 61 64 65">
    <location>
        <begin position="60"/>
        <end position="174"/>
    </location>
</feature>
<feature type="disulfide bond" evidence="39 45 61 64 65">
    <location>
        <begin position="64"/>
        <end position="169"/>
    </location>
</feature>
<feature type="sequence variant" id="VAR_015453" description="In KIDAD; dbSNP:rs104894408." evidence="10">
    <original>G</original>
    <variation>R</variation>
    <location>
        <position position="12"/>
    </location>
</feature>
<feature type="sequence variant" id="VAR_015454" description="In KIDAD; dbSNP:rs28929485." evidence="10">
    <original>S</original>
    <variation>F</variation>
    <location>
        <position position="17"/>
    </location>
</feature>
<feature type="sequence variant" id="VAR_083826" description="In DFNB1A." evidence="46">
    <location>
        <begin position="24"/>
        <end position="226"/>
    </location>
</feature>
<feature type="sequence variant" id="VAR_002137" description="In dbSNP:rs2274084." evidence="3 16 18 24 26 41 52">
    <original>V</original>
    <variation>I</variation>
    <location>
        <position position="27"/>
    </location>
</feature>
<feature type="sequence variant" id="VAR_023605" description="In DFNB1A; dbSNP:rs111033190." evidence="26">
    <original>R</original>
    <variation>H</variation>
    <location>
        <position position="32"/>
    </location>
</feature>
<feature type="sequence variant" id="VAR_016839" description="In dbSNP:rs111033190." evidence="56">
    <original>R</original>
    <variation>L</variation>
    <location>
        <position position="32"/>
    </location>
</feature>
<feature type="sequence variant" id="VAR_002138" description="In DFNB1A; it is correctly synthesized and targeted to the plasma membrane; it inefficiently forms intercellular channels that display an abnormal electrical behavior; dbSNP:rs35887622." evidence="21 31 35 47 48 53">
    <original>M</original>
    <variation>T</variation>
    <location>
        <position position="34"/>
    </location>
</feature>
<feature type="sequence variant" id="VAR_002139" description="In DFNB1A; dbSNP:rs72474224." evidence="3 7 12 16 20 22 27 35 44 47 52">
    <original>V</original>
    <variation>I</variation>
    <location>
        <position position="37"/>
    </location>
</feature>
<feature type="sequence variant" id="VAR_008709" description="In DFNA3A; dbSNP:rs104894407." evidence="54">
    <original>W</original>
    <variation>C</variation>
    <location>
        <position position="44"/>
    </location>
</feature>
<feature type="sequence variant" id="VAR_032749" description="In DFNA3A; does not affect protein trafficking; affects the ability to form functional channels; dominant negative effect; dbSNP:rs104894413." evidence="17">
    <original>W</original>
    <variation>S</variation>
    <location>
        <position position="44"/>
    </location>
</feature>
<feature type="sequence variant" id="VAR_015455" description="In DFNB1A; dbSNP:rs72561723." evidence="16 27">
    <original>G</original>
    <variation>E</variation>
    <location>
        <position position="45"/>
    </location>
</feature>
<feature type="sequence variant" id="VAR_023606" description="May contribute to deafness." evidence="22">
    <original>DEQ</original>
    <variation>E</variation>
    <location>
        <begin position="46"/>
        <end position="48"/>
    </location>
</feature>
<feature type="sequence variant" id="VAR_060798" description="In DFNA3A; the mutant is targeted to the plasma membrane but fails to transfer ionic calcium or propidium iodide intercellularly suggesting disruption of both ionic and biochemical coupling; heterozygous gap junctions also show dysfunctional intercellular couplings and hemichannel opening confirming the dominant-negative nature of the mutation." evidence="40">
    <original>D</original>
    <variation>E</variation>
    <location>
        <position position="46"/>
    </location>
</feature>
<feature type="sequence variant" id="VAR_015456" description="In KIDAD and HID syndrome; dbSNP:rs28931594." evidence="10 11 15 19">
    <original>D</original>
    <variation>N</variation>
    <location>
        <position position="50"/>
    </location>
</feature>
<feature type="sequence variant" id="VAR_015935" description="In KIDAD; dbSNP:rs28931594." evidence="19">
    <original>D</original>
    <variation>Y</variation>
    <location>
        <position position="50"/>
    </location>
</feature>
<feature type="sequence variant" id="VAR_032750" description="In BAPS; dbSNP:rs104894412." evidence="23">
    <original>N</original>
    <variation>K</variation>
    <location>
        <position position="54"/>
    </location>
</feature>
<feature type="sequence variant" id="VAR_009965" description="In PPKDFN; impairs trafficking; localizes intracellularly closed to the nucleus; affects the ability to form functional channels; phenotype can be rescued by coexpression with wild-type protein; dbSNP:rs104894404." evidence="4 17">
    <original>G</original>
    <variation>A</variation>
    <location>
        <position position="59"/>
    </location>
</feature>
<feature type="sequence variant" id="VAR_032751" description="In BAPS; dbSNP:rs104894410." evidence="28">
    <original>G</original>
    <variation>S</variation>
    <location>
        <position position="59"/>
    </location>
</feature>
<feature type="sequence variant" id="VAR_008710" description="In VOWNKL and PPKDFN; impairs trafficking; localizes intracellularly closed to the nucleus; affects the ability to form functional channels; phenotype can be rescued by coexpression with wild-type protein; dbSNP:rs104894403." evidence="2 5 17">
    <original>D</original>
    <variation>H</variation>
    <location>
        <position position="66"/>
    </location>
</feature>
<feature type="sequence variant" id="VAR_015457" description="In DFNB1A; dbSNP:rs1373154561." evidence="16">
    <original>I</original>
    <variation>T</variation>
    <location>
        <position position="71"/>
    </location>
</feature>
<feature type="sequence variant" id="VAR_060799" description="In PPKDFN; the mutant has a dominant-negative effect on connexin trafficking; dbSNP:rs121912968." evidence="36">
    <original>H</original>
    <variation>R</variation>
    <location>
        <position position="73"/>
    </location>
</feature>
<feature type="sequence variant" id="VAR_015936" description="In PPKDFN; the mutant protein completely prevents the formation of functional channels; dbSNP:rs28931593." evidence="14 30">
    <original>R</original>
    <variation>Q</variation>
    <location>
        <position position="75"/>
    </location>
</feature>
<feature type="sequence variant" id="VAR_002140" description="In PPKDFN and DFNA3A; does not affect protein trafficking; affects the ability to form functional channels; dominant negative effect; dbSNP:rs104894402." evidence="17 55">
    <original>R</original>
    <variation>W</variation>
    <location>
        <position position="75"/>
    </location>
</feature>
<feature type="sequence variant" id="VAR_002141" description="In DFNB1A; dbSNP:rs104894397." evidence="49">
    <original>W</original>
    <variation>R</variation>
    <location>
        <position position="77"/>
    </location>
</feature>
<feature type="sequence variant" id="VAR_023607" description="In DFNB1A; dbSNP:rs1555341957." evidence="9">
    <original>L</original>
    <variation>P</variation>
    <location>
        <position position="79"/>
    </location>
</feature>
<feature type="sequence variant" id="VAR_023608" description="In DFNB1A." evidence="26">
    <original>Q</original>
    <variation>K</variation>
    <location>
        <position position="80"/>
    </location>
</feature>
<feature type="sequence variant" id="VAR_002142" description="In dbSNP:rs111033218." evidence="53">
    <original>F</original>
    <variation>L</variation>
    <location>
        <position position="83"/>
    </location>
</feature>
<feature type="sequence variant" id="VAR_002143" description="In DFNB1A; sorted to the plasma membrane normally and forms gap junctions that were morphologically and electrically indistinguishable from those of control; the mutation reduces the permeability of GJB2 gap junction channels to inositol 1,4,5-trisphosphate (Ins(1,4,5)P3), resulting in blockade of the Ins(1,4,5)P3-induced inward calcium current in neighboring cells; dbSNP:rs104894409." evidence="25 52">
    <original>V</original>
    <variation>L</variation>
    <location>
        <position position="84"/>
    </location>
</feature>
<feature type="sequence variant" id="VAR_060800" description="In DFNB1A; the mutant disrupts cellular communication; dbSNP:rs104894409." evidence="33">
    <original>V</original>
    <variation>M</variation>
    <location>
        <position position="84"/>
    </location>
</feature>
<feature type="sequence variant" id="VAR_015458" description="In DFNB1A; does not form gap junctions since the mutated protein is confined in the cytoplasm and not transported to the cell membrane; when the mutation is coexpressed with the wild-type protein ionic and biochemical coupling is normal consistent with the recessive nature of the mutation; dbSNP:rs1291519904." evidence="16 27 40">
    <original>T</original>
    <variation>R</variation>
    <location>
        <position position="86"/>
    </location>
</feature>
<feature type="sequence variant" id="VAR_015937" description="In DFNB1A; dbSNP:rs80338945." evidence="7 8">
    <original>L</original>
    <variation>P</variation>
    <location>
        <position position="90"/>
    </location>
</feature>
<feature type="sequence variant" id="VAR_023609" description="In DFNB1A; dbSNP:rs397516871." evidence="26">
    <original>M</original>
    <variation>I</variation>
    <location>
        <position position="93"/>
    </location>
</feature>
<feature type="sequence variant" id="VAR_002144" description="In DFNB1A; dbSNP:rs111033299." evidence="52">
    <original>V</original>
    <variation>M</variation>
    <location>
        <position position="95"/>
    </location>
</feature>
<feature type="sequence variant" id="VAR_015938" description="In dbSNP:rs1316789942." evidence="18">
    <original>I</original>
    <variation>T</variation>
    <location>
        <position position="111"/>
    </location>
</feature>
<feature type="sequence variant" id="VAR_002145" description="In DFNB1A; uncertain significance; dbSNP:rs80338946." evidence="52">
    <original>S</original>
    <variation>R</variation>
    <location>
        <position position="113"/>
    </location>
</feature>
<feature type="sequence variant" id="VAR_009966" description="In dbSNP:rs2274083." evidence="3 16 18 24 26">
    <original>E</original>
    <variation>G</variation>
    <location>
        <position position="114"/>
    </location>
</feature>
<feature type="sequence variant" id="VAR_069519" evidence="29">
    <original>D</original>
    <variation>H</variation>
    <location>
        <position position="117"/>
    </location>
</feature>
<feature type="sequence variant" id="VAR_060801" description="In DFNB1A.">
    <location>
        <position position="118"/>
    </location>
</feature>
<feature type="sequence variant" id="VAR_023610" description="In DFNB1A." evidence="26">
    <location>
        <position position="120"/>
    </location>
</feature>
<feature type="sequence variant" id="VAR_015459" description="In dbSNP:rs111033188." evidence="16 27">
    <original>T</original>
    <variation>N</variation>
    <location>
        <position position="123"/>
    </location>
</feature>
<feature type="sequence variant" id="VAR_015939" description="In dbSNP:rs111033196." evidence="18 22 26">
    <original>R</original>
    <variation>H</variation>
    <location>
        <position position="127"/>
    </location>
</feature>
<feature type="sequence variant" id="VAR_023611" description="In DFNB1A; dbSNP:rs397516875." evidence="26">
    <original>E</original>
    <variation>K</variation>
    <location>
        <position position="129"/>
    </location>
</feature>
<feature type="sequence variant" id="VAR_069520" description="In DFNB1A; dbSNP:rs779018464." evidence="44">
    <original>G</original>
    <variation>A</variation>
    <location>
        <position position="130"/>
    </location>
</feature>
<feature type="sequence variant" id="VAR_069521" description="In DFNB1A; dbSNP:rs779018464." evidence="34">
    <original>G</original>
    <variation>D</variation>
    <location>
        <position position="130"/>
    </location>
</feature>
<feature type="sequence variant" id="VAR_069522" description="In VOWNKL." evidence="29 37">
    <original>G</original>
    <variation>V</variation>
    <location>
        <position position="130"/>
    </location>
</feature>
<feature type="sequence variant" id="VAR_069523" evidence="29">
    <location>
        <position position="142"/>
    </location>
</feature>
<feature type="sequence variant" id="VAR_015940" description="In DFNA3A; dbSNP:rs104894401." evidence="8">
    <original>R</original>
    <variation>Q</variation>
    <location>
        <position position="143"/>
    </location>
</feature>
<feature type="sequence variant" id="VAR_015460" description="In DFNB1A; dbSNP:rs80338948." evidence="9 16 26 27 51">
    <original>R</original>
    <variation>W</variation>
    <location>
        <position position="143"/>
    </location>
</feature>
<feature type="sequence variant" id="VAR_069524" evidence="29">
    <original>A</original>
    <variation>P</variation>
    <location>
        <position position="148"/>
    </location>
</feature>
<feature type="sequence variant" id="VAR_009967" description="May contribute to deafness; dbSNP:rs111033186." evidence="18 22 26">
    <original>V</original>
    <variation>I</variation>
    <location>
        <position position="153"/>
    </location>
</feature>
<feature type="sequence variant" id="VAR_015941" description="In DFNB1A; dbSNP:rs28931592." evidence="13">
    <original>D</original>
    <variation>V</variation>
    <location>
        <position position="159"/>
    </location>
</feature>
<feature type="sequence variant" id="VAR_002146" description="In dbSNP:rs34988750." evidence="22 53">
    <original>G</original>
    <variation>S</variation>
    <location>
        <position position="160"/>
    </location>
</feature>
<feature type="sequence variant" id="VAR_015942" description="In dbSNP:rs376898963." evidence="18">
    <original>R</original>
    <variation>W</variation>
    <location>
        <position position="165"/>
    </location>
</feature>
<feature type="sequence variant" id="VAR_023612" description="May contribute to deafness; dbSNP:rs111033360." evidence="22">
    <original>V</original>
    <variation>M</variation>
    <location>
        <position position="167"/>
    </location>
</feature>
<feature type="sequence variant" id="VAR_057959" description="In a patient with congenital erythrokeratodermia; uncertain significance; dbSNP:rs200104362." evidence="38">
    <original>K</original>
    <variation>R</variation>
    <location>
        <position position="168"/>
    </location>
</feature>
<feature type="sequence variant" id="VAR_009968" description="In dbSNP:rs774518779.">
    <original>C</original>
    <variation>Y</variation>
    <location>
        <position position="169"/>
    </location>
</feature>
<feature type="sequence variant" id="VAR_023613" description="In DFNB1A; dbSNP:rs568612627." evidence="9">
    <original>V</original>
    <variation>A</variation>
    <location>
        <position position="178"/>
    </location>
</feature>
<feature type="sequence variant" id="VAR_032752" description="In DFNA3A; dbSNP:rs28931595." evidence="20">
    <original>D</original>
    <variation>N</variation>
    <location>
        <position position="179"/>
    </location>
</feature>
<feature type="sequence variant" id="VAR_015943" description="In DFNB1A; dbSNP:rs80338950." evidence="26 50">
    <original>R</original>
    <variation>P</variation>
    <location>
        <position position="184"/>
    </location>
</feature>
<feature type="sequence variant" id="VAR_023614" description="In DFNA3A; dbSNP:rs80338950." evidence="9">
    <original>R</original>
    <variation>Q</variation>
    <location>
        <position position="184"/>
    </location>
</feature>
<feature type="sequence variant" id="VAR_009969" description="In DFNB1A; dbSNP:rs998045226." evidence="7">
    <original>R</original>
    <variation>W</variation>
    <location>
        <position position="184"/>
    </location>
</feature>
<feature type="sequence variant" id="VAR_015461" description="In DFNB1A; uncertain significance; dbSNP:rs397516878." evidence="16 27">
    <original>F</original>
    <variation>L</variation>
    <location>
        <position position="191"/>
    </location>
</feature>
<feature type="sequence variant" id="VAR_023615" description="In DFNA3A; dbSNP:rs777236559." evidence="9">
    <original>A</original>
    <variation>S</variation>
    <location>
        <position position="197"/>
    </location>
</feature>
<feature type="sequence variant" id="VAR_015944" description="In DFNA3A; dbSNP:rs104894406." evidence="6">
    <original>C</original>
    <variation>F</variation>
    <location>
        <position position="202"/>
    </location>
</feature>
<feature type="sequence variant" id="VAR_023616" description="In DFNB1A." evidence="9">
    <original>I</original>
    <variation>K</variation>
    <location>
        <position position="203"/>
    </location>
</feature>
<feature type="sequence variant" id="VAR_009970" description="In dbSNP:rs76838169." evidence="3 16">
    <original>I</original>
    <variation>T</variation>
    <location>
        <position position="203"/>
    </location>
</feature>
<feature type="sequence variant" id="VAR_023617" description="In DFNB1A." evidence="9">
    <original>L</original>
    <variation>P</variation>
    <location>
        <position position="214"/>
    </location>
</feature>
<feature type="mutagenesis site" description="Strongly reduced insertion into the cell membrane and strongly reduced gap junction plaque assembly." evidence="43">
    <location>
        <begin position="2"/>
        <end position="10"/>
    </location>
</feature>
<feature type="mutagenesis site" description="Loss of gap junction ion conductance." evidence="43">
    <location>
        <begin position="2"/>
        <end position="7"/>
    </location>
</feature>
<feature type="mutagenesis site" description="Loss of gap junction ion conductance, probably due to very low open probability of the channels. Can form functional channels with wild-type, but with strongly reduced channel conductance. No visible effect on channel assembly and membrane insertion." evidence="43">
    <original>M</original>
    <variation>A</variation>
    <location>
        <position position="34"/>
    </location>
</feature>
<feature type="sequence conflict" description="In Ref. 1; AAD21314." evidence="59" ref="1">
    <original>T</original>
    <variation>S</variation>
    <location>
        <position position="86"/>
    </location>
</feature>
<feature type="sequence conflict" description="In Ref. 4; AAY25170." evidence="59" ref="4">
    <original>K</original>
    <variation>N</variation>
    <location>
        <position position="112"/>
    </location>
</feature>
<feature type="helix" evidence="68">
    <location>
        <begin position="5"/>
        <end position="14"/>
    </location>
</feature>
<feature type="strand" evidence="68">
    <location>
        <begin position="15"/>
        <end position="17"/>
    </location>
</feature>
<feature type="helix" evidence="68">
    <location>
        <begin position="19"/>
        <end position="38"/>
    </location>
</feature>
<feature type="helix" evidence="68">
    <location>
        <begin position="40"/>
        <end position="42"/>
    </location>
</feature>
<feature type="turn" evidence="68">
    <location>
        <begin position="43"/>
        <end position="50"/>
    </location>
</feature>
<feature type="strand" evidence="68">
    <location>
        <begin position="52"/>
        <end position="54"/>
    </location>
</feature>
<feature type="helix" evidence="68">
    <location>
        <begin position="60"/>
        <end position="68"/>
    </location>
</feature>
<feature type="helix" evidence="68">
    <location>
        <begin position="73"/>
        <end position="102"/>
    </location>
</feature>
<feature type="turn" evidence="66">
    <location>
        <begin position="106"/>
        <end position="108"/>
    </location>
</feature>
<feature type="helix" evidence="70">
    <location>
        <begin position="116"/>
        <end position="124"/>
    </location>
</feature>
<feature type="helix" evidence="68">
    <location>
        <begin position="130"/>
        <end position="158"/>
    </location>
</feature>
<feature type="strand" evidence="69">
    <location>
        <begin position="159"/>
        <end position="162"/>
    </location>
</feature>
<feature type="strand" evidence="68">
    <location>
        <begin position="165"/>
        <end position="169"/>
    </location>
</feature>
<feature type="strand" evidence="67">
    <location>
        <begin position="174"/>
        <end position="176"/>
    </location>
</feature>
<feature type="strand" evidence="68">
    <location>
        <begin position="178"/>
        <end position="181"/>
    </location>
</feature>
<feature type="helix" evidence="68">
    <location>
        <begin position="185"/>
        <end position="216"/>
    </location>
</feature>
<feature type="turn" evidence="70">
    <location>
        <begin position="218"/>
        <end position="220"/>
    </location>
</feature>
<gene>
    <name type="primary">GJB2</name>
</gene>
<keyword id="KW-0002">3D-structure</keyword>
<keyword id="KW-0106">Calcium</keyword>
<keyword id="KW-0965">Cell junction</keyword>
<keyword id="KW-1003">Cell membrane</keyword>
<keyword id="KW-0209">Deafness</keyword>
<keyword id="KW-0225">Disease variant</keyword>
<keyword id="KW-1015">Disulfide bond</keyword>
<keyword id="KW-0038">Ectodermal dysplasia</keyword>
<keyword id="KW-0303">Gap junction</keyword>
<keyword id="KW-1009">Hearing</keyword>
<keyword id="KW-0977">Ichthyosis</keyword>
<keyword id="KW-0472">Membrane</keyword>
<keyword id="KW-0479">Metal-binding</keyword>
<keyword id="KW-1010">Non-syndromic deafness</keyword>
<keyword id="KW-1007">Palmoplantar keratoderma</keyword>
<keyword id="KW-1267">Proteomics identification</keyword>
<keyword id="KW-1185">Reference proteome</keyword>
<keyword id="KW-0812">Transmembrane</keyword>
<keyword id="KW-1133">Transmembrane helix</keyword>
<protein>
    <recommendedName>
        <fullName>Gap junction beta-2 protein</fullName>
    </recommendedName>
    <alternativeName>
        <fullName evidence="57 58">Connexin-26</fullName>
        <shortName evidence="58">Cx26</shortName>
    </alternativeName>
</protein>
<organism>
    <name type="scientific">Homo sapiens</name>
    <name type="common">Human</name>
    <dbReference type="NCBI Taxonomy" id="9606"/>
    <lineage>
        <taxon>Eukaryota</taxon>
        <taxon>Metazoa</taxon>
        <taxon>Chordata</taxon>
        <taxon>Craniata</taxon>
        <taxon>Vertebrata</taxon>
        <taxon>Euteleostomi</taxon>
        <taxon>Mammalia</taxon>
        <taxon>Eutheria</taxon>
        <taxon>Euarchontoglires</taxon>
        <taxon>Primates</taxon>
        <taxon>Haplorrhini</taxon>
        <taxon>Catarrhini</taxon>
        <taxon>Hominidae</taxon>
        <taxon>Homo</taxon>
    </lineage>
</organism>
<dbReference type="EMBL" id="M86849">
    <property type="protein sequence ID" value="AAD21314.1"/>
    <property type="molecule type" value="mRNA"/>
</dbReference>
<dbReference type="EMBL" id="AF281280">
    <property type="protein sequence ID" value="AAF91440.1"/>
    <property type="molecule type" value="Genomic_DNA"/>
</dbReference>
<dbReference type="EMBL" id="AF479776">
    <property type="protein sequence ID" value="AAL87696.1"/>
    <property type="molecule type" value="Genomic_DNA"/>
</dbReference>
<dbReference type="EMBL" id="AY255853">
    <property type="protein sequence ID" value="AAP34178.1"/>
    <property type="molecule type" value="Genomic_DNA"/>
</dbReference>
<dbReference type="EMBL" id="AY275646">
    <property type="protein sequence ID" value="AAQ94940.1"/>
    <property type="molecule type" value="Genomic_DNA"/>
</dbReference>
<dbReference type="EMBL" id="AY275647">
    <property type="protein sequence ID" value="AAQ94941.1"/>
    <property type="molecule type" value="Genomic_DNA"/>
</dbReference>
<dbReference type="EMBL" id="AY275648">
    <property type="protein sequence ID" value="AAQ94942.1"/>
    <property type="molecule type" value="Genomic_DNA"/>
</dbReference>
<dbReference type="EMBL" id="AY275649">
    <property type="protein sequence ID" value="AAQ94943.1"/>
    <property type="molecule type" value="Genomic_DNA"/>
</dbReference>
<dbReference type="EMBL" id="AY275650">
    <property type="protein sequence ID" value="AAQ94944.1"/>
    <property type="molecule type" value="Genomic_DNA"/>
</dbReference>
<dbReference type="EMBL" id="AY275651">
    <property type="protein sequence ID" value="AAQ94945.1"/>
    <property type="molecule type" value="Genomic_DNA"/>
</dbReference>
<dbReference type="EMBL" id="AY275652">
    <property type="protein sequence ID" value="AAQ94946.1"/>
    <property type="molecule type" value="Genomic_DNA"/>
</dbReference>
<dbReference type="EMBL" id="AY275653">
    <property type="protein sequence ID" value="AAQ94947.1"/>
    <property type="molecule type" value="Genomic_DNA"/>
</dbReference>
<dbReference type="EMBL" id="AY275654">
    <property type="protein sequence ID" value="AAQ94948.1"/>
    <property type="molecule type" value="Genomic_DNA"/>
</dbReference>
<dbReference type="EMBL" id="AY280971">
    <property type="protein sequence ID" value="AAQ17213.1"/>
    <property type="molecule type" value="Genomic_DNA"/>
</dbReference>
<dbReference type="EMBL" id="AY953438">
    <property type="protein sequence ID" value="AAY25169.1"/>
    <property type="molecule type" value="Genomic_DNA"/>
</dbReference>
<dbReference type="EMBL" id="AY953441">
    <property type="protein sequence ID" value="AAY25170.1"/>
    <property type="molecule type" value="Genomic_DNA"/>
</dbReference>
<dbReference type="EMBL" id="BT006732">
    <property type="protein sequence ID" value="AAP35378.1"/>
    <property type="molecule type" value="mRNA"/>
</dbReference>
<dbReference type="EMBL" id="AL138688">
    <property type="status" value="NOT_ANNOTATED_CDS"/>
    <property type="molecule type" value="Genomic_DNA"/>
</dbReference>
<dbReference type="EMBL" id="BC017048">
    <property type="protein sequence ID" value="AAH17048.1"/>
    <property type="molecule type" value="mRNA"/>
</dbReference>
<dbReference type="EMBL" id="BC071703">
    <property type="protein sequence ID" value="AAH71703.1"/>
    <property type="molecule type" value="mRNA"/>
</dbReference>
<dbReference type="CCDS" id="CCDS9290.1"/>
<dbReference type="PIR" id="A43424">
    <property type="entry name" value="A43424"/>
</dbReference>
<dbReference type="RefSeq" id="NP_003995.2">
    <property type="nucleotide sequence ID" value="NM_004004.5"/>
</dbReference>
<dbReference type="RefSeq" id="XP_011533351.1">
    <property type="nucleotide sequence ID" value="XM_011535049.3"/>
</dbReference>
<dbReference type="RefSeq" id="XP_054230438.1">
    <property type="nucleotide sequence ID" value="XM_054374463.1"/>
</dbReference>
<dbReference type="PDB" id="2ZW3">
    <property type="method" value="X-ray"/>
    <property type="resolution" value="3.50 A"/>
    <property type="chains" value="A/B/C/D/E/F=1-226"/>
</dbReference>
<dbReference type="PDB" id="3IZ1">
    <property type="method" value="EM"/>
    <property type="resolution" value="6.00 A"/>
    <property type="chains" value="A/B/C=1-226"/>
</dbReference>
<dbReference type="PDB" id="3IZ2">
    <property type="method" value="EM"/>
    <property type="resolution" value="10.00 A"/>
    <property type="chains" value="A/B/C=8-226"/>
</dbReference>
<dbReference type="PDB" id="5ER7">
    <property type="method" value="X-ray"/>
    <property type="resolution" value="3.29 A"/>
    <property type="chains" value="A/B=1-226"/>
</dbReference>
<dbReference type="PDB" id="5ERA">
    <property type="method" value="X-ray"/>
    <property type="resolution" value="3.80 A"/>
    <property type="chains" value="A/B=1-226"/>
</dbReference>
<dbReference type="PDB" id="5KJ3">
    <property type="method" value="NMR"/>
    <property type="chains" value="A=1-22"/>
</dbReference>
<dbReference type="PDB" id="5KJG">
    <property type="method" value="NMR"/>
    <property type="chains" value="A=1-22"/>
</dbReference>
<dbReference type="PDB" id="6UVR">
    <property type="method" value="EM"/>
    <property type="resolution" value="4.00 A"/>
    <property type="chains" value="A/B/C/D/E/F/G/H/I/J/K/L=1-226"/>
</dbReference>
<dbReference type="PDB" id="6UVS">
    <property type="method" value="EM"/>
    <property type="resolution" value="4.20 A"/>
    <property type="chains" value="A/B/C/D/E/F/G/H/I/J/K/L=1-226"/>
</dbReference>
<dbReference type="PDB" id="6UVT">
    <property type="method" value="EM"/>
    <property type="resolution" value="7.50 A"/>
    <property type="chains" value="A/B/C/D/E/F/G/H/I/J/K/L=1-226"/>
</dbReference>
<dbReference type="PDB" id="7QEO">
    <property type="method" value="EM"/>
    <property type="resolution" value="2.90 A"/>
    <property type="chains" value="A/B=1-226"/>
</dbReference>
<dbReference type="PDB" id="7QEQ">
    <property type="method" value="EM"/>
    <property type="resolution" value="1.90 A"/>
    <property type="chains" value="A/B/C/D/E/F/G/H/I/J/K/L=1-226"/>
</dbReference>
<dbReference type="PDB" id="7QER">
    <property type="method" value="EM"/>
    <property type="resolution" value="2.20 A"/>
    <property type="chains" value="A/B/C/D/E/F/G/H/I/J/K/L=1-226"/>
</dbReference>
<dbReference type="PDB" id="7QES">
    <property type="method" value="EM"/>
    <property type="resolution" value="2.60 A"/>
    <property type="chains" value="A/B=1-226"/>
</dbReference>
<dbReference type="PDB" id="7QET">
    <property type="method" value="EM"/>
    <property type="resolution" value="2.10 A"/>
    <property type="chains" value="A/B/C/D/E/F/G/H/I/J/K/L=1-226"/>
</dbReference>
<dbReference type="PDB" id="7QEU">
    <property type="method" value="EM"/>
    <property type="resolution" value="2.70 A"/>
    <property type="chains" value="A/B=1-226"/>
</dbReference>
<dbReference type="PDB" id="7QEV">
    <property type="method" value="EM"/>
    <property type="resolution" value="2.90 A"/>
    <property type="chains" value="A/B=1-226"/>
</dbReference>
<dbReference type="PDB" id="7QEW">
    <property type="method" value="EM"/>
    <property type="resolution" value="2.10 A"/>
    <property type="chains" value="G/H/I/J/K/L=1-226"/>
</dbReference>
<dbReference type="PDB" id="7QEY">
    <property type="method" value="EM"/>
    <property type="resolution" value="2.00 A"/>
    <property type="chains" value="G/H/I/J/K/L=9-217"/>
</dbReference>
<dbReference type="PDB" id="8Q9Z">
    <property type="method" value="EM"/>
    <property type="resolution" value="2.40 A"/>
    <property type="chains" value="A/B/C/D/E/F/G/H/I/J/K/L=1-226"/>
</dbReference>
<dbReference type="PDB" id="8QA0">
    <property type="method" value="EM"/>
    <property type="resolution" value="2.30 A"/>
    <property type="chains" value="A/B/C/D/E/F/G/H/I/J/K/L=1-226"/>
</dbReference>
<dbReference type="PDB" id="8QA1">
    <property type="method" value="EM"/>
    <property type="resolution" value="2.30 A"/>
    <property type="chains" value="A/B/C/D/E/F/G/H/I/J/K/L=1-226"/>
</dbReference>
<dbReference type="PDB" id="8QA2">
    <property type="method" value="EM"/>
    <property type="resolution" value="2.30 A"/>
    <property type="chains" value="A/B/C/D/E/F/G/H/I/J/K/L=1-226"/>
</dbReference>
<dbReference type="PDB" id="8QA3">
    <property type="method" value="EM"/>
    <property type="resolution" value="2.30 A"/>
    <property type="chains" value="A/B/C/D/E/F/G/H/I/J/K/L=1-226"/>
</dbReference>
<dbReference type="PDBsum" id="2ZW3"/>
<dbReference type="PDBsum" id="3IZ1"/>
<dbReference type="PDBsum" id="3IZ2"/>
<dbReference type="PDBsum" id="5ER7"/>
<dbReference type="PDBsum" id="5ERA"/>
<dbReference type="PDBsum" id="5KJ3"/>
<dbReference type="PDBsum" id="5KJG"/>
<dbReference type="PDBsum" id="6UVR"/>
<dbReference type="PDBsum" id="6UVS"/>
<dbReference type="PDBsum" id="6UVT"/>
<dbReference type="PDBsum" id="7QEO"/>
<dbReference type="PDBsum" id="7QEQ"/>
<dbReference type="PDBsum" id="7QER"/>
<dbReference type="PDBsum" id="7QES"/>
<dbReference type="PDBsum" id="7QET"/>
<dbReference type="PDBsum" id="7QEU"/>
<dbReference type="PDBsum" id="7QEV"/>
<dbReference type="PDBsum" id="7QEW"/>
<dbReference type="PDBsum" id="7QEY"/>
<dbReference type="PDBsum" id="8Q9Z"/>
<dbReference type="PDBsum" id="8QA0"/>
<dbReference type="PDBsum" id="8QA1"/>
<dbReference type="PDBsum" id="8QA2"/>
<dbReference type="PDBsum" id="8QA3"/>
<dbReference type="EMDB" id="EMD-13935"/>
<dbReference type="EMDB" id="EMD-13937"/>
<dbReference type="EMDB" id="EMD-13938"/>
<dbReference type="EMDB" id="EMD-13939"/>
<dbReference type="EMDB" id="EMD-13940"/>
<dbReference type="EMDB" id="EMD-13941"/>
<dbReference type="EMDB" id="EMD-13942"/>
<dbReference type="EMDB" id="EMD-13943"/>
<dbReference type="EMDB" id="EMD-13944"/>
<dbReference type="EMDB" id="EMD-18290"/>
<dbReference type="EMDB" id="EMD-18291"/>
<dbReference type="EMDB" id="EMD-18292"/>
<dbReference type="EMDB" id="EMD-18293"/>
<dbReference type="EMDB" id="EMD-18294"/>
<dbReference type="EMDB" id="EMD-18295"/>
<dbReference type="EMDB" id="EMD-18296"/>
<dbReference type="EMDB" id="EMD-18297"/>
<dbReference type="EMDB" id="EMD-20914"/>
<dbReference type="EMDB" id="EMD-20915"/>
<dbReference type="EMDB" id="EMD-20916"/>
<dbReference type="EMDB" id="EMD-22789"/>
<dbReference type="SMR" id="P29033"/>
<dbReference type="BioGRID" id="108972">
    <property type="interactions" value="70"/>
</dbReference>
<dbReference type="CORUM" id="P29033"/>
<dbReference type="DIP" id="DIP-59742N"/>
<dbReference type="FunCoup" id="P29033">
    <property type="interactions" value="25"/>
</dbReference>
<dbReference type="IntAct" id="P29033">
    <property type="interactions" value="55"/>
</dbReference>
<dbReference type="STRING" id="9606.ENSP00000372295"/>
<dbReference type="BindingDB" id="P29033"/>
<dbReference type="ChEMBL" id="CHEMBL4295738"/>
<dbReference type="DrugCentral" id="P29033"/>
<dbReference type="TCDB" id="1.A.24.1.3">
    <property type="family name" value="the gap junction-forming connexin (connexin) family"/>
</dbReference>
<dbReference type="iPTMnet" id="P29033"/>
<dbReference type="PhosphoSitePlus" id="P29033"/>
<dbReference type="SwissPalm" id="P29033"/>
<dbReference type="BioMuta" id="GJB2"/>
<dbReference type="DMDM" id="77416855"/>
<dbReference type="MassIVE" id="P29033"/>
<dbReference type="PaxDb" id="9606-ENSP00000372295"/>
<dbReference type="PeptideAtlas" id="P29033"/>
<dbReference type="ProteomicsDB" id="54514"/>
<dbReference type="ABCD" id="P29033">
    <property type="antibodies" value="1 sequenced antibody"/>
</dbReference>
<dbReference type="Antibodypedia" id="4587">
    <property type="antibodies" value="335 antibodies from 36 providers"/>
</dbReference>
<dbReference type="DNASU" id="2706"/>
<dbReference type="Ensembl" id="ENST00000382844.2">
    <property type="protein sequence ID" value="ENSP00000372295.1"/>
    <property type="gene ID" value="ENSG00000165474.8"/>
</dbReference>
<dbReference type="Ensembl" id="ENST00000382848.5">
    <property type="protein sequence ID" value="ENSP00000372299.4"/>
    <property type="gene ID" value="ENSG00000165474.8"/>
</dbReference>
<dbReference type="GeneID" id="2706"/>
<dbReference type="KEGG" id="hsa:2706"/>
<dbReference type="MANE-Select" id="ENST00000382848.5">
    <property type="protein sequence ID" value="ENSP00000372299.4"/>
    <property type="RefSeq nucleotide sequence ID" value="NM_004004.6"/>
    <property type="RefSeq protein sequence ID" value="NP_003995.2"/>
</dbReference>
<dbReference type="UCSC" id="uc001umy.4">
    <property type="organism name" value="human"/>
</dbReference>
<dbReference type="AGR" id="HGNC:4284"/>
<dbReference type="CTD" id="2706"/>
<dbReference type="DisGeNET" id="2706"/>
<dbReference type="GeneCards" id="GJB2"/>
<dbReference type="GeneReviews" id="GJB2"/>
<dbReference type="HGNC" id="HGNC:4284">
    <property type="gene designation" value="GJB2"/>
</dbReference>
<dbReference type="HPA" id="ENSG00000165474">
    <property type="expression patterns" value="Tissue enhanced (cervix, esophagus, vagina)"/>
</dbReference>
<dbReference type="MalaCards" id="GJB2"/>
<dbReference type="MIM" id="121011">
    <property type="type" value="gene"/>
</dbReference>
<dbReference type="MIM" id="124500">
    <property type="type" value="phenotype"/>
</dbReference>
<dbReference type="MIM" id="148210">
    <property type="type" value="phenotype"/>
</dbReference>
<dbReference type="MIM" id="148350">
    <property type="type" value="phenotype"/>
</dbReference>
<dbReference type="MIM" id="149200">
    <property type="type" value="phenotype"/>
</dbReference>
<dbReference type="MIM" id="220290">
    <property type="type" value="phenotype"/>
</dbReference>
<dbReference type="MIM" id="601544">
    <property type="type" value="phenotype"/>
</dbReference>
<dbReference type="MIM" id="602540">
    <property type="type" value="phenotype"/>
</dbReference>
<dbReference type="neXtProt" id="NX_P29033"/>
<dbReference type="OpenTargets" id="ENSG00000165474"/>
<dbReference type="Orphanet" id="494">
    <property type="disease" value="Keratoderma hereditarium mutilans"/>
</dbReference>
<dbReference type="Orphanet" id="477">
    <property type="disease" value="KID syndrome"/>
</dbReference>
<dbReference type="Orphanet" id="2698">
    <property type="disease" value="Knuckle pads-leukonychia-sensorineural deafness-palmoplantar hyperkeratosis syndrome"/>
</dbReference>
<dbReference type="Orphanet" id="2202">
    <property type="disease" value="Palmoplantar keratoderma-deafness syndrome"/>
</dbReference>
<dbReference type="Orphanet" id="166286">
    <property type="disease" value="Porokeratotic eccrine ostial and dermal duct nevus"/>
</dbReference>
<dbReference type="Orphanet" id="90635">
    <property type="disease" value="Rare autosomal dominant non-syndromic sensorineural deafness type DFNA"/>
</dbReference>
<dbReference type="Orphanet" id="90636">
    <property type="disease" value="Rare autosomal recessive non-syndromic sensorineural deafness type DFNB"/>
</dbReference>
<dbReference type="PharmGKB" id="PA28695"/>
<dbReference type="VEuPathDB" id="HostDB:ENSG00000165474"/>
<dbReference type="eggNOG" id="ENOG502QWM8">
    <property type="taxonomic scope" value="Eukaryota"/>
</dbReference>
<dbReference type="GeneTree" id="ENSGT01030000234513"/>
<dbReference type="HOGENOM" id="CLU_037388_4_1_1"/>
<dbReference type="InParanoid" id="P29033"/>
<dbReference type="OMA" id="QQPNHEN"/>
<dbReference type="OrthoDB" id="8934037at2759"/>
<dbReference type="PAN-GO" id="P29033">
    <property type="GO annotations" value="3 GO annotations based on evolutionary models"/>
</dbReference>
<dbReference type="PhylomeDB" id="P29033"/>
<dbReference type="TreeFam" id="TF329606"/>
<dbReference type="PathwayCommons" id="P29033"/>
<dbReference type="Reactome" id="R-HSA-190704">
    <property type="pathway name" value="Oligomerization of connexins into connexons"/>
</dbReference>
<dbReference type="Reactome" id="R-HSA-190827">
    <property type="pathway name" value="Transport of connexins along the secretory pathway"/>
</dbReference>
<dbReference type="Reactome" id="R-HSA-190861">
    <property type="pathway name" value="Gap junction assembly"/>
</dbReference>
<dbReference type="Reactome" id="R-HSA-190872">
    <property type="pathway name" value="Transport of connexons to the plasma membrane"/>
</dbReference>
<dbReference type="SignaLink" id="P29033"/>
<dbReference type="SIGNOR" id="P29033"/>
<dbReference type="BioGRID-ORCS" id="2706">
    <property type="hits" value="41 hits in 1150 CRISPR screens"/>
</dbReference>
<dbReference type="ChiTaRS" id="GJB2">
    <property type="organism name" value="human"/>
</dbReference>
<dbReference type="EvolutionaryTrace" id="P29033"/>
<dbReference type="GeneWiki" id="GJB2"/>
<dbReference type="GenomeRNAi" id="2706"/>
<dbReference type="Pharos" id="P29033">
    <property type="development level" value="Tbio"/>
</dbReference>
<dbReference type="PRO" id="PR:P29033"/>
<dbReference type="Proteomes" id="UP000005640">
    <property type="component" value="Chromosome 13"/>
</dbReference>
<dbReference type="RNAct" id="P29033">
    <property type="molecule type" value="protein"/>
</dbReference>
<dbReference type="Bgee" id="ENSG00000165474">
    <property type="expression patterns" value="Expressed in gingival epithelium and 131 other cell types or tissues"/>
</dbReference>
<dbReference type="ExpressionAtlas" id="P29033">
    <property type="expression patterns" value="baseline and differential"/>
</dbReference>
<dbReference type="GO" id="GO:0005922">
    <property type="term" value="C:connexin complex"/>
    <property type="evidence" value="ECO:0000314"/>
    <property type="project" value="UniProtKB"/>
</dbReference>
<dbReference type="GO" id="GO:0005793">
    <property type="term" value="C:endoplasmic reticulum-Golgi intermediate compartment"/>
    <property type="evidence" value="ECO:0000304"/>
    <property type="project" value="Reactome"/>
</dbReference>
<dbReference type="GO" id="GO:0005921">
    <property type="term" value="C:gap junction"/>
    <property type="evidence" value="ECO:0000314"/>
    <property type="project" value="ARUK-UCL"/>
</dbReference>
<dbReference type="GO" id="GO:0005886">
    <property type="term" value="C:plasma membrane"/>
    <property type="evidence" value="ECO:0000314"/>
    <property type="project" value="UniProtKB"/>
</dbReference>
<dbReference type="GO" id="GO:0005509">
    <property type="term" value="F:calcium ion binding"/>
    <property type="evidence" value="ECO:0000314"/>
    <property type="project" value="UniProtKB"/>
</dbReference>
<dbReference type="GO" id="GO:0005243">
    <property type="term" value="F:gap junction channel activity"/>
    <property type="evidence" value="ECO:0000314"/>
    <property type="project" value="UniProtKB"/>
</dbReference>
<dbReference type="GO" id="GO:1903763">
    <property type="term" value="F:gap junction channel activity involved in cell communication by electrical coupling"/>
    <property type="evidence" value="ECO:0000314"/>
    <property type="project" value="ARUK-UCL"/>
</dbReference>
<dbReference type="GO" id="GO:0042802">
    <property type="term" value="F:identical protein binding"/>
    <property type="evidence" value="ECO:0000353"/>
    <property type="project" value="IntAct"/>
</dbReference>
<dbReference type="GO" id="GO:0007267">
    <property type="term" value="P:cell-cell signaling"/>
    <property type="evidence" value="ECO:0000250"/>
    <property type="project" value="UniProtKB"/>
</dbReference>
<dbReference type="GO" id="GO:0016264">
    <property type="term" value="P:gap junction assembly"/>
    <property type="evidence" value="ECO:0000314"/>
    <property type="project" value="ARUK-UCL"/>
</dbReference>
<dbReference type="GO" id="GO:1990349">
    <property type="term" value="P:gap junction-mediated intercellular transport"/>
    <property type="evidence" value="ECO:0000314"/>
    <property type="project" value="UniProtKB"/>
</dbReference>
<dbReference type="GO" id="GO:0007605">
    <property type="term" value="P:sensory perception of sound"/>
    <property type="evidence" value="ECO:0007669"/>
    <property type="project" value="UniProtKB-KW"/>
</dbReference>
<dbReference type="GO" id="GO:0055085">
    <property type="term" value="P:transmembrane transport"/>
    <property type="evidence" value="ECO:0000314"/>
    <property type="project" value="ARUK-UCL"/>
</dbReference>
<dbReference type="FunFam" id="1.20.1440.80:FF:000001">
    <property type="entry name" value="Gap junction alpha-1"/>
    <property type="match status" value="1"/>
</dbReference>
<dbReference type="Gene3D" id="1.20.1440.80">
    <property type="entry name" value="Gap junction channel protein cysteine-rich domain"/>
    <property type="match status" value="1"/>
</dbReference>
<dbReference type="InterPro" id="IPR000500">
    <property type="entry name" value="Connexin"/>
</dbReference>
<dbReference type="InterPro" id="IPR002268">
    <property type="entry name" value="Connexin26"/>
</dbReference>
<dbReference type="InterPro" id="IPR019570">
    <property type="entry name" value="Connexin_CCC"/>
</dbReference>
<dbReference type="InterPro" id="IPR017990">
    <property type="entry name" value="Connexin_CS"/>
</dbReference>
<dbReference type="InterPro" id="IPR013092">
    <property type="entry name" value="Connexin_N"/>
</dbReference>
<dbReference type="InterPro" id="IPR038359">
    <property type="entry name" value="Connexin_N_sf"/>
</dbReference>
<dbReference type="PANTHER" id="PTHR11984">
    <property type="entry name" value="CONNEXIN"/>
    <property type="match status" value="1"/>
</dbReference>
<dbReference type="PANTHER" id="PTHR11984:SF46">
    <property type="entry name" value="GAP JUNCTION BETA-2 PROTEIN"/>
    <property type="match status" value="1"/>
</dbReference>
<dbReference type="Pfam" id="PF00029">
    <property type="entry name" value="Connexin"/>
    <property type="match status" value="1"/>
</dbReference>
<dbReference type="PRINTS" id="PR00206">
    <property type="entry name" value="CONNEXIN"/>
</dbReference>
<dbReference type="PRINTS" id="PR01139">
    <property type="entry name" value="CONNEXINB2"/>
</dbReference>
<dbReference type="SMART" id="SM00037">
    <property type="entry name" value="CNX"/>
    <property type="match status" value="1"/>
</dbReference>
<dbReference type="SMART" id="SM01089">
    <property type="entry name" value="Connexin_CCC"/>
    <property type="match status" value="1"/>
</dbReference>
<dbReference type="PROSITE" id="PS00407">
    <property type="entry name" value="CONNEXINS_1"/>
    <property type="match status" value="1"/>
</dbReference>
<dbReference type="PROSITE" id="PS00408">
    <property type="entry name" value="CONNEXINS_2"/>
    <property type="match status" value="1"/>
</dbReference>